<proteinExistence type="evidence at protein level"/>
<feature type="chain" id="PRO_0000075817" description="LIM domain only protein 3">
    <location>
        <begin position="1"/>
        <end position="145"/>
    </location>
</feature>
<feature type="domain" description="LIM zinc-binding 1" evidence="1">
    <location>
        <begin position="11"/>
        <end position="73"/>
    </location>
</feature>
<feature type="domain" description="LIM zinc-binding 2" evidence="1">
    <location>
        <begin position="75"/>
        <end position="137"/>
    </location>
</feature>
<feature type="splice variant" id="VSP_045312" description="In isoform 3." evidence="3">
    <original>M</original>
    <variation>MQKKEKSFGIQM</variation>
    <location>
        <position position="1"/>
    </location>
</feature>
<feature type="splice variant" id="VSP_047379" description="In isoform 4." evidence="2">
    <original>M</original>
    <variation>MLMEGGRAAAARNVSSIQM</variation>
    <location>
        <position position="1"/>
    </location>
</feature>
<feature type="splice variant" id="VSP_045313" description="In isoform 2." evidence="2">
    <original>VGSTLYTKANLILCRRDYLR</original>
    <variation>HLKRCGSIYIHAAHTEIGICVTLEWPLPFVIIDFSQQITIAW</variation>
    <location>
        <begin position="50"/>
        <end position="69"/>
    </location>
</feature>
<feature type="sequence conflict" description="In Ref. 2; BAC04582." evidence="4" ref="2">
    <original>L</original>
    <variation>P</variation>
    <location>
        <position position="29"/>
    </location>
</feature>
<evidence type="ECO:0000255" key="1">
    <source>
        <dbReference type="PROSITE-ProRule" id="PRU00125"/>
    </source>
</evidence>
<evidence type="ECO:0000303" key="2">
    <source>
    </source>
</evidence>
<evidence type="ECO:0000303" key="3">
    <source ref="1"/>
</evidence>
<evidence type="ECO:0000305" key="4"/>
<sequence length="145" mass="16594">MLSVQPDTKPKGCAGCNRKIKDRYLLKALDKYWHEDCLKCACCDCRLGEVGSTLYTKANLILCRRDYLRLFGVTGNCAACSKLIPAFEMVMRAKDNVYHLDCFACQLCNQRFCVGDKFFLKNNMILCQTDYEEGLMKEGYAPQVR</sequence>
<protein>
    <recommendedName>
        <fullName>LIM domain only protein 3</fullName>
        <shortName>LMO-3</shortName>
    </recommendedName>
    <alternativeName>
        <fullName>Neuronal-specific transcription factor DAT1</fullName>
    </alternativeName>
    <alternativeName>
        <fullName>Rhombotin-3</fullName>
    </alternativeName>
</protein>
<keyword id="KW-0025">Alternative splicing</keyword>
<keyword id="KW-0440">LIM domain</keyword>
<keyword id="KW-0479">Metal-binding</keyword>
<keyword id="KW-1267">Proteomics identification</keyword>
<keyword id="KW-1185">Reference proteome</keyword>
<keyword id="KW-0677">Repeat</keyword>
<keyword id="KW-0804">Transcription</keyword>
<keyword id="KW-0805">Transcription regulation</keyword>
<keyword id="KW-0862">Zinc</keyword>
<dbReference type="EMBL" id="AB044745">
    <property type="protein sequence ID" value="BAD93349.1"/>
    <property type="molecule type" value="mRNA"/>
</dbReference>
<dbReference type="EMBL" id="AB044746">
    <property type="protein sequence ID" value="BAD93350.1"/>
    <property type="molecule type" value="mRNA"/>
</dbReference>
<dbReference type="EMBL" id="AK095595">
    <property type="protein sequence ID" value="BAC04582.1"/>
    <property type="molecule type" value="mRNA"/>
</dbReference>
<dbReference type="EMBL" id="AK294474">
    <property type="protein sequence ID" value="BAG57701.1"/>
    <property type="molecule type" value="mRNA"/>
</dbReference>
<dbReference type="EMBL" id="AK294909">
    <property type="protein sequence ID" value="BAG57996.1"/>
    <property type="molecule type" value="mRNA"/>
</dbReference>
<dbReference type="EMBL" id="AK316021">
    <property type="protein sequence ID" value="BAH14392.1"/>
    <property type="molecule type" value="mRNA"/>
</dbReference>
<dbReference type="EMBL" id="AC007529">
    <property type="status" value="NOT_ANNOTATED_CDS"/>
    <property type="molecule type" value="Genomic_DNA"/>
</dbReference>
<dbReference type="EMBL" id="AC007552">
    <property type="status" value="NOT_ANNOTATED_CDS"/>
    <property type="molecule type" value="Genomic_DNA"/>
</dbReference>
<dbReference type="EMBL" id="CH471094">
    <property type="protein sequence ID" value="EAW96371.1"/>
    <property type="molecule type" value="Genomic_DNA"/>
</dbReference>
<dbReference type="EMBL" id="BC026311">
    <property type="protein sequence ID" value="AAH26311.1"/>
    <property type="molecule type" value="mRNA"/>
</dbReference>
<dbReference type="EMBL" id="BC050085">
    <property type="protein sequence ID" value="AAH50085.1"/>
    <property type="molecule type" value="mRNA"/>
</dbReference>
<dbReference type="CCDS" id="CCDS58210.1">
    <molecule id="Q8TAP4-2"/>
</dbReference>
<dbReference type="CCDS" id="CCDS58211.1">
    <molecule id="Q8TAP4-3"/>
</dbReference>
<dbReference type="CCDS" id="CCDS58212.1">
    <molecule id="Q8TAP4-4"/>
</dbReference>
<dbReference type="CCDS" id="CCDS8678.1">
    <molecule id="Q8TAP4-1"/>
</dbReference>
<dbReference type="RefSeq" id="NP_001001395.1">
    <molecule id="Q8TAP4-1"/>
    <property type="nucleotide sequence ID" value="NM_001001395.2"/>
</dbReference>
<dbReference type="RefSeq" id="NP_001230538.1">
    <molecule id="Q8TAP4-1"/>
    <property type="nucleotide sequence ID" value="NM_001243609.1"/>
</dbReference>
<dbReference type="RefSeq" id="NP_001230539.1">
    <molecule id="Q8TAP4-1"/>
    <property type="nucleotide sequence ID" value="NM_001243610.1"/>
</dbReference>
<dbReference type="RefSeq" id="NP_001230540.1">
    <molecule id="Q8TAP4-3"/>
    <property type="nucleotide sequence ID" value="NM_001243611.1"/>
</dbReference>
<dbReference type="RefSeq" id="NP_001230541.1">
    <molecule id="Q8TAP4-4"/>
    <property type="nucleotide sequence ID" value="NM_001243612.1"/>
</dbReference>
<dbReference type="RefSeq" id="NP_001230542.1">
    <molecule id="Q8TAP4-2"/>
    <property type="nucleotide sequence ID" value="NM_001243613.1"/>
</dbReference>
<dbReference type="RefSeq" id="NP_061110.2">
    <molecule id="Q8TAP4-1"/>
    <property type="nucleotide sequence ID" value="NM_018640.4"/>
</dbReference>
<dbReference type="RefSeq" id="XP_006719173.1">
    <molecule id="Q8TAP4-1"/>
    <property type="nucleotide sequence ID" value="XM_006719110.5"/>
</dbReference>
<dbReference type="RefSeq" id="XP_006719174.1">
    <molecule id="Q8TAP4-1"/>
    <property type="nucleotide sequence ID" value="XM_006719111.3"/>
</dbReference>
<dbReference type="RefSeq" id="XP_011519064.1">
    <molecule id="Q8TAP4-1"/>
    <property type="nucleotide sequence ID" value="XM_011520762.2"/>
</dbReference>
<dbReference type="RefSeq" id="XP_011519065.1">
    <property type="nucleotide sequence ID" value="XM_011520763.1"/>
</dbReference>
<dbReference type="RefSeq" id="XP_047285109.1">
    <molecule id="Q8TAP4-1"/>
    <property type="nucleotide sequence ID" value="XM_047429153.1"/>
</dbReference>
<dbReference type="RefSeq" id="XP_054228533.1">
    <molecule id="Q8TAP4-1"/>
    <property type="nucleotide sequence ID" value="XM_054372558.1"/>
</dbReference>
<dbReference type="RefSeq" id="XP_054228534.1">
    <molecule id="Q8TAP4-1"/>
    <property type="nucleotide sequence ID" value="XM_054372559.1"/>
</dbReference>
<dbReference type="RefSeq" id="XP_054228535.1">
    <molecule id="Q8TAP4-1"/>
    <property type="nucleotide sequence ID" value="XM_054372560.1"/>
</dbReference>
<dbReference type="SMR" id="Q8TAP4"/>
<dbReference type="BioGRID" id="120977">
    <property type="interactions" value="148"/>
</dbReference>
<dbReference type="DIP" id="DIP-50129N"/>
<dbReference type="FunCoup" id="Q8TAP4">
    <property type="interactions" value="1552"/>
</dbReference>
<dbReference type="IntAct" id="Q8TAP4">
    <property type="interactions" value="244"/>
</dbReference>
<dbReference type="MINT" id="Q8TAP4"/>
<dbReference type="iPTMnet" id="Q8TAP4"/>
<dbReference type="PhosphoSitePlus" id="Q8TAP4"/>
<dbReference type="BioMuta" id="LMO3"/>
<dbReference type="DMDM" id="34098603"/>
<dbReference type="MassIVE" id="Q8TAP4"/>
<dbReference type="PeptideAtlas" id="Q8TAP4"/>
<dbReference type="ProteomicsDB" id="4115"/>
<dbReference type="ProteomicsDB" id="4187"/>
<dbReference type="ProteomicsDB" id="73900">
    <molecule id="Q8TAP4-1"/>
</dbReference>
<dbReference type="Antibodypedia" id="23835">
    <property type="antibodies" value="284 antibodies from 29 providers"/>
</dbReference>
<dbReference type="DNASU" id="55885"/>
<dbReference type="Ensembl" id="ENST00000261169.10">
    <molecule id="Q8TAP4-3"/>
    <property type="protein sequence ID" value="ENSP00000261169.6"/>
    <property type="gene ID" value="ENSG00000048540.16"/>
</dbReference>
<dbReference type="Ensembl" id="ENST00000320122.10">
    <molecule id="Q8TAP4-1"/>
    <property type="protein sequence ID" value="ENSP00000312856.6"/>
    <property type="gene ID" value="ENSG00000048540.16"/>
</dbReference>
<dbReference type="Ensembl" id="ENST00000354662.5">
    <molecule id="Q8TAP4-1"/>
    <property type="protein sequence ID" value="ENSP00000346689.1"/>
    <property type="gene ID" value="ENSG00000048540.16"/>
</dbReference>
<dbReference type="Ensembl" id="ENST00000441439.6">
    <molecule id="Q8TAP4-1"/>
    <property type="protein sequence ID" value="ENSP00000412479.2"/>
    <property type="gene ID" value="ENSG00000048540.16"/>
</dbReference>
<dbReference type="Ensembl" id="ENST00000447609.5">
    <molecule id="Q8TAP4-1"/>
    <property type="protein sequence ID" value="ENSP00000413703.1"/>
    <property type="gene ID" value="ENSG00000048540.16"/>
</dbReference>
<dbReference type="Ensembl" id="ENST00000534946.5">
    <molecule id="Q8TAP4-1"/>
    <property type="protein sequence ID" value="ENSP00000439275.1"/>
    <property type="gene ID" value="ENSG00000048540.16"/>
</dbReference>
<dbReference type="Ensembl" id="ENST00000535535.5">
    <molecule id="Q8TAP4-1"/>
    <property type="protein sequence ID" value="ENSP00000446115.1"/>
    <property type="gene ID" value="ENSG00000048540.16"/>
</dbReference>
<dbReference type="Ensembl" id="ENST00000537304.6">
    <molecule id="Q8TAP4-1"/>
    <property type="protein sequence ID" value="ENSP00000440099.1"/>
    <property type="gene ID" value="ENSG00000048540.16"/>
</dbReference>
<dbReference type="Ensembl" id="ENST00000540445.5">
    <molecule id="Q8TAP4-2"/>
    <property type="protein sequence ID" value="ENSP00000442786.1"/>
    <property type="gene ID" value="ENSG00000048540.16"/>
</dbReference>
<dbReference type="Ensembl" id="ENST00000540848.5">
    <molecule id="Q8TAP4-1"/>
    <property type="protein sequence ID" value="ENSP00000445751.1"/>
    <property type="gene ID" value="ENSG00000048540.16"/>
</dbReference>
<dbReference type="Ensembl" id="ENST00000541295.5">
    <molecule id="Q8TAP4-4"/>
    <property type="protein sequence ID" value="ENSP00000446463.1"/>
    <property type="gene ID" value="ENSG00000048540.16"/>
</dbReference>
<dbReference type="Ensembl" id="ENST00000541846.5">
    <molecule id="Q8TAP4-1"/>
    <property type="protein sequence ID" value="ENSP00000444393.1"/>
    <property type="gene ID" value="ENSG00000048540.16"/>
</dbReference>
<dbReference type="GeneID" id="55885"/>
<dbReference type="KEGG" id="hsa:55885"/>
<dbReference type="MANE-Select" id="ENST00000537304.6">
    <property type="protein sequence ID" value="ENSP00000440099.1"/>
    <property type="RefSeq nucleotide sequence ID" value="NM_018640.5"/>
    <property type="RefSeq protein sequence ID" value="NP_061110.2"/>
</dbReference>
<dbReference type="UCSC" id="uc001rdj.3">
    <molecule id="Q8TAP4-1"/>
    <property type="organism name" value="human"/>
</dbReference>
<dbReference type="AGR" id="HGNC:6643"/>
<dbReference type="CTD" id="55885"/>
<dbReference type="DisGeNET" id="55885"/>
<dbReference type="GeneCards" id="LMO3"/>
<dbReference type="HGNC" id="HGNC:6643">
    <property type="gene designation" value="LMO3"/>
</dbReference>
<dbReference type="HPA" id="ENSG00000048540">
    <property type="expression patterns" value="Tissue enhanced (brain)"/>
</dbReference>
<dbReference type="MIM" id="180386">
    <property type="type" value="gene"/>
</dbReference>
<dbReference type="neXtProt" id="NX_Q8TAP4"/>
<dbReference type="OpenTargets" id="ENSG00000048540"/>
<dbReference type="PharmGKB" id="PA30409"/>
<dbReference type="VEuPathDB" id="HostDB:ENSG00000048540"/>
<dbReference type="GeneTree" id="ENSGT00940000153908"/>
<dbReference type="HOGENOM" id="CLU_001357_7_1_1"/>
<dbReference type="InParanoid" id="Q8TAP4"/>
<dbReference type="OMA" id="DKMTMDG"/>
<dbReference type="OrthoDB" id="6352355at2759"/>
<dbReference type="PAN-GO" id="Q8TAP4">
    <property type="GO annotations" value="4 GO annotations based on evolutionary models"/>
</dbReference>
<dbReference type="PhylomeDB" id="Q8TAP4"/>
<dbReference type="TreeFam" id="TF351071"/>
<dbReference type="PathwayCommons" id="Q8TAP4"/>
<dbReference type="SignaLink" id="Q8TAP4"/>
<dbReference type="SIGNOR" id="Q8TAP4"/>
<dbReference type="BioGRID-ORCS" id="55885">
    <property type="hits" value="8 hits in 1145 CRISPR screens"/>
</dbReference>
<dbReference type="ChiTaRS" id="LMO3">
    <property type="organism name" value="human"/>
</dbReference>
<dbReference type="GeneWiki" id="LMO3"/>
<dbReference type="GenomeRNAi" id="55885"/>
<dbReference type="Pharos" id="Q8TAP4">
    <property type="development level" value="Tbio"/>
</dbReference>
<dbReference type="PRO" id="PR:Q8TAP4"/>
<dbReference type="Proteomes" id="UP000005640">
    <property type="component" value="Chromosome 12"/>
</dbReference>
<dbReference type="RNAct" id="Q8TAP4">
    <property type="molecule type" value="protein"/>
</dbReference>
<dbReference type="Bgee" id="ENSG00000048540">
    <property type="expression patterns" value="Expressed in middle temporal gyrus and 165 other cell types or tissues"/>
</dbReference>
<dbReference type="ExpressionAtlas" id="Q8TAP4">
    <property type="expression patterns" value="baseline and differential"/>
</dbReference>
<dbReference type="GO" id="GO:0005737">
    <property type="term" value="C:cytoplasm"/>
    <property type="evidence" value="ECO:0000314"/>
    <property type="project" value="UniProtKB"/>
</dbReference>
<dbReference type="GO" id="GO:0005634">
    <property type="term" value="C:nucleus"/>
    <property type="evidence" value="ECO:0000318"/>
    <property type="project" value="GO_Central"/>
</dbReference>
<dbReference type="GO" id="GO:0140297">
    <property type="term" value="F:DNA-binding transcription factor binding"/>
    <property type="evidence" value="ECO:0000318"/>
    <property type="project" value="GO_Central"/>
</dbReference>
<dbReference type="GO" id="GO:0046872">
    <property type="term" value="F:metal ion binding"/>
    <property type="evidence" value="ECO:0007669"/>
    <property type="project" value="UniProtKB-KW"/>
</dbReference>
<dbReference type="GO" id="GO:0003713">
    <property type="term" value="F:transcription coactivator activity"/>
    <property type="evidence" value="ECO:0000318"/>
    <property type="project" value="GO_Central"/>
</dbReference>
<dbReference type="GO" id="GO:0070373">
    <property type="term" value="P:negative regulation of ERK1 and ERK2 cascade"/>
    <property type="evidence" value="ECO:0000314"/>
    <property type="project" value="UniProtKB"/>
</dbReference>
<dbReference type="GO" id="GO:0045600">
    <property type="term" value="P:positive regulation of fat cell differentiation"/>
    <property type="evidence" value="ECO:0000315"/>
    <property type="project" value="UniProtKB"/>
</dbReference>
<dbReference type="GO" id="GO:2000324">
    <property type="term" value="P:positive regulation of nuclear receptor-mediated glucocorticoid signaling pathway"/>
    <property type="evidence" value="ECO:0000314"/>
    <property type="project" value="UniProtKB"/>
</dbReference>
<dbReference type="GO" id="GO:0035360">
    <property type="term" value="P:positive regulation of peroxisome proliferator activated receptor signaling pathway"/>
    <property type="evidence" value="ECO:0000314"/>
    <property type="project" value="UniProtKB"/>
</dbReference>
<dbReference type="GO" id="GO:0045944">
    <property type="term" value="P:positive regulation of transcription by RNA polymerase II"/>
    <property type="evidence" value="ECO:0000318"/>
    <property type="project" value="GO_Central"/>
</dbReference>
<dbReference type="CDD" id="cd09388">
    <property type="entry name" value="LIM1_LMO1_LMO3"/>
    <property type="match status" value="1"/>
</dbReference>
<dbReference type="CDD" id="cd09389">
    <property type="entry name" value="LIM2_LMO1_LMO3"/>
    <property type="match status" value="1"/>
</dbReference>
<dbReference type="FunFam" id="2.10.110.10:FF:000015">
    <property type="entry name" value="LIM domain only 3"/>
    <property type="match status" value="1"/>
</dbReference>
<dbReference type="FunFam" id="2.10.110.10:FF:000016">
    <property type="entry name" value="LIM domain only 3"/>
    <property type="match status" value="1"/>
</dbReference>
<dbReference type="Gene3D" id="2.10.110.10">
    <property type="entry name" value="Cysteine Rich Protein"/>
    <property type="match status" value="2"/>
</dbReference>
<dbReference type="InterPro" id="IPR050945">
    <property type="entry name" value="LMO_RBTN_TF"/>
</dbReference>
<dbReference type="InterPro" id="IPR001781">
    <property type="entry name" value="Znf_LIM"/>
</dbReference>
<dbReference type="PANTHER" id="PTHR45787">
    <property type="entry name" value="LD11652P"/>
    <property type="match status" value="1"/>
</dbReference>
<dbReference type="PANTHER" id="PTHR45787:SF7">
    <property type="entry name" value="LIM DOMAIN ONLY PROTEIN 3"/>
    <property type="match status" value="1"/>
</dbReference>
<dbReference type="Pfam" id="PF00412">
    <property type="entry name" value="LIM"/>
    <property type="match status" value="2"/>
</dbReference>
<dbReference type="SMART" id="SM00132">
    <property type="entry name" value="LIM"/>
    <property type="match status" value="2"/>
</dbReference>
<dbReference type="SUPFAM" id="SSF57716">
    <property type="entry name" value="Glucocorticoid receptor-like (DNA-binding domain)"/>
    <property type="match status" value="3"/>
</dbReference>
<dbReference type="PROSITE" id="PS00478">
    <property type="entry name" value="LIM_DOMAIN_1"/>
    <property type="match status" value="2"/>
</dbReference>
<dbReference type="PROSITE" id="PS50023">
    <property type="entry name" value="LIM_DOMAIN_2"/>
    <property type="match status" value="2"/>
</dbReference>
<organism>
    <name type="scientific">Homo sapiens</name>
    <name type="common">Human</name>
    <dbReference type="NCBI Taxonomy" id="9606"/>
    <lineage>
        <taxon>Eukaryota</taxon>
        <taxon>Metazoa</taxon>
        <taxon>Chordata</taxon>
        <taxon>Craniata</taxon>
        <taxon>Vertebrata</taxon>
        <taxon>Euteleostomi</taxon>
        <taxon>Mammalia</taxon>
        <taxon>Eutheria</taxon>
        <taxon>Euarchontoglires</taxon>
        <taxon>Primates</taxon>
        <taxon>Haplorrhini</taxon>
        <taxon>Catarrhini</taxon>
        <taxon>Hominidae</taxon>
        <taxon>Homo</taxon>
    </lineage>
</organism>
<gene>
    <name type="primary">LMO3</name>
    <name type="synonym">RBTN3</name>
    <name type="synonym">RBTNL2</name>
    <name type="synonym">RHOM3</name>
</gene>
<name>LMO3_HUMAN</name>
<accession>Q8TAP4</accession>
<accession>B4DG90</accession>
<accession>B4DH35</accession>
<accession>Q58A66</accession>
<accession>Q58A67</accession>
<accession>Q8N974</accession>
<accession>Q9UDD5</accession>
<comment type="interaction">
    <interactant intactId="EBI-742259">
        <id>Q8TAP4</id>
    </interactant>
    <interactant intactId="EBI-744695">
        <id>Q8N9N5</id>
        <label>BANP</label>
    </interactant>
    <organismsDiffer>false</organismsDiffer>
    <experiments>3</experiments>
</comment>
<comment type="interaction">
    <interactant intactId="EBI-742259">
        <id>Q8TAP4</id>
    </interactant>
    <interactant intactId="EBI-741724">
        <id>Q8NA61</id>
        <label>CBY2</label>
    </interactant>
    <organismsDiffer>false</organismsDiffer>
    <experiments>3</experiments>
</comment>
<comment type="interaction">
    <interactant intactId="EBI-742259">
        <id>Q8TAP4</id>
    </interactant>
    <interactant intactId="EBI-10181988">
        <id>Q8IYX8-2</id>
        <label>CEP57L1</label>
    </interactant>
    <organismsDiffer>false</organismsDiffer>
    <experiments>3</experiments>
</comment>
<comment type="interaction">
    <interactant intactId="EBI-742259">
        <id>Q8TAP4</id>
    </interactant>
    <interactant intactId="EBI-741921">
        <id>Q96AQ9</id>
        <label>FAM131C</label>
    </interactant>
    <organismsDiffer>false</organismsDiffer>
    <experiments>3</experiments>
</comment>
<comment type="interaction">
    <interactant intactId="EBI-742259">
        <id>Q8TAP4</id>
    </interactant>
    <interactant intactId="EBI-3864120">
        <id>Q8WUP2</id>
        <label>FBLIM1</label>
    </interactant>
    <organismsDiffer>false</organismsDiffer>
    <experiments>5</experiments>
</comment>
<comment type="interaction">
    <interactant intactId="EBI-742259">
        <id>Q8TAP4</id>
    </interactant>
    <interactant intactId="EBI-10198738">
        <id>Q6FG41</id>
        <label>FOS</label>
    </interactant>
    <organismsDiffer>false</organismsDiffer>
    <experiments>3</experiments>
</comment>
<comment type="interaction">
    <interactant intactId="EBI-742259">
        <id>Q8TAP4</id>
    </interactant>
    <interactant intactId="EBI-745305">
        <id>Q13422</id>
        <label>IKZF1</label>
    </interactant>
    <organismsDiffer>false</organismsDiffer>
    <experiments>3</experiments>
</comment>
<comment type="interaction">
    <interactant intactId="EBI-742259">
        <id>Q8TAP4</id>
    </interactant>
    <interactant intactId="EBI-9027502">
        <id>Q719H9</id>
        <label>KCTD1</label>
    </interactant>
    <organismsDiffer>false</organismsDiffer>
    <experiments>3</experiments>
</comment>
<comment type="interaction">
    <interactant intactId="EBI-742259">
        <id>Q8TAP4</id>
    </interactant>
    <interactant intactId="EBI-677177">
        <id>Q86U70</id>
        <label>LDB1</label>
    </interactant>
    <organismsDiffer>false</organismsDiffer>
    <experiments>4</experiments>
</comment>
<comment type="interaction">
    <interactant intactId="EBI-742259">
        <id>Q8TAP4</id>
    </interactant>
    <interactant intactId="EBI-10178410">
        <id>Q86Y26</id>
        <label>NUTM1</label>
    </interactant>
    <organismsDiffer>false</organismsDiffer>
    <experiments>3</experiments>
</comment>
<comment type="interaction">
    <interactant intactId="EBI-742259">
        <id>Q8TAP4</id>
    </interactant>
    <interactant intactId="EBI-748741">
        <id>Q8N6K7</id>
        <label>SAMD3</label>
    </interactant>
    <organismsDiffer>false</organismsDiffer>
    <experiments>3</experiments>
</comment>
<comment type="interaction">
    <interactant intactId="EBI-742259">
        <id>Q8TAP4</id>
    </interactant>
    <interactant intactId="EBI-10198587">
        <id>Q02446</id>
        <label>SP4</label>
    </interactant>
    <organismsDiffer>false</organismsDiffer>
    <experiments>3</experiments>
</comment>
<comment type="interaction">
    <interactant intactId="EBI-742259">
        <id>Q8TAP4</id>
    </interactant>
    <interactant intactId="EBI-529518">
        <id>Q86VP1</id>
        <label>TAX1BP1</label>
    </interactant>
    <organismsDiffer>false</organismsDiffer>
    <experiments>3</experiments>
</comment>
<comment type="interaction">
    <interactant intactId="EBI-11742507">
        <id>Q8TAP4-4</id>
    </interactant>
    <interactant intactId="EBI-11096309">
        <id>Q9NYB9-2</id>
        <label>ABI2</label>
    </interactant>
    <organismsDiffer>false</organismsDiffer>
    <experiments>3</experiments>
</comment>
<comment type="interaction">
    <interactant intactId="EBI-11742507">
        <id>Q8TAP4-4</id>
    </interactant>
    <interactant intactId="EBI-751746">
        <id>Q15027</id>
        <label>ACAP1</label>
    </interactant>
    <organismsDiffer>false</organismsDiffer>
    <experiments>3</experiments>
</comment>
<comment type="interaction">
    <interactant intactId="EBI-11742507">
        <id>Q8TAP4-4</id>
    </interactant>
    <interactant intactId="EBI-1045357">
        <id>Q9NPJ3</id>
        <label>ACOT13</label>
    </interactant>
    <organismsDiffer>false</organismsDiffer>
    <experiments>3</experiments>
</comment>
<comment type="interaction">
    <interactant intactId="EBI-11742507">
        <id>Q8TAP4-4</id>
    </interactant>
    <interactant intactId="EBI-11976299">
        <id>Q5BKX5-3</id>
        <label>ACTMAP</label>
    </interactant>
    <organismsDiffer>false</organismsDiffer>
    <experiments>3</experiments>
</comment>
<comment type="interaction">
    <interactant intactId="EBI-11742507">
        <id>Q8TAP4-4</id>
    </interactant>
    <interactant intactId="EBI-19125216">
        <id>Q86WK6</id>
        <label>AMIGO1</label>
    </interactant>
    <organismsDiffer>false</organismsDiffer>
    <experiments>3</experiments>
</comment>
<comment type="interaction">
    <interactant intactId="EBI-11742507">
        <id>Q8TAP4-4</id>
    </interactant>
    <interactant intactId="EBI-746752">
        <id>Q9Y2J4</id>
        <label>AMOTL2</label>
    </interactant>
    <organismsDiffer>false</organismsDiffer>
    <experiments>3</experiments>
</comment>
<comment type="interaction">
    <interactant intactId="EBI-11742507">
        <id>Q8TAP4-4</id>
    </interactant>
    <interactant intactId="EBI-25833200">
        <id>Q8IWZ3-3</id>
        <label>ANKHD1</label>
    </interactant>
    <organismsDiffer>false</organismsDiffer>
    <experiments>3</experiments>
</comment>
<comment type="interaction">
    <interactant intactId="EBI-11742507">
        <id>Q8TAP4-4</id>
    </interactant>
    <interactant intactId="EBI-3447299">
        <id>O43307</id>
        <label>ARHGEF9</label>
    </interactant>
    <organismsDiffer>false</organismsDiffer>
    <experiments>3</experiments>
</comment>
<comment type="interaction">
    <interactant intactId="EBI-11742507">
        <id>Q8TAP4-4</id>
    </interactant>
    <interactant intactId="EBI-5280499">
        <id>Q66PJ3-4</id>
        <label>ARL6IP4</label>
    </interactant>
    <organismsDiffer>false</organismsDiffer>
    <experiments>3</experiments>
</comment>
<comment type="interaction">
    <interactant intactId="EBI-11742507">
        <id>Q8TAP4-4</id>
    </interactant>
    <interactant intactId="EBI-2323092">
        <id>Q9Y576</id>
        <label>ASB1</label>
    </interactant>
    <organismsDiffer>false</organismsDiffer>
    <experiments>3</experiments>
</comment>
<comment type="interaction">
    <interactant intactId="EBI-11742507">
        <id>Q8TAP4-4</id>
    </interactant>
    <interactant intactId="EBI-8640233">
        <id>Q5T686</id>
        <label>AVPI1</label>
    </interactant>
    <organismsDiffer>false</organismsDiffer>
    <experiments>3</experiments>
</comment>
<comment type="interaction">
    <interactant intactId="EBI-11742507">
        <id>Q8TAP4-4</id>
    </interactant>
    <interactant intactId="EBI-8994378">
        <id>Q14032</id>
        <label>BAAT</label>
    </interactant>
    <organismsDiffer>false</organismsDiffer>
    <experiments>3</experiments>
</comment>
<comment type="interaction">
    <interactant intactId="EBI-11742507">
        <id>Q8TAP4-4</id>
    </interactant>
    <interactant intactId="EBI-25884811">
        <id>Q13072</id>
        <label>BAGE</label>
    </interactant>
    <organismsDiffer>false</organismsDiffer>
    <experiments>3</experiments>
</comment>
<comment type="interaction">
    <interactant intactId="EBI-11742507">
        <id>Q8TAP4-4</id>
    </interactant>
    <interactant intactId="EBI-11524452">
        <id>Q8N9N5-2</id>
        <label>BANP</label>
    </interactant>
    <organismsDiffer>false</organismsDiffer>
    <experiments>6</experiments>
</comment>
<comment type="interaction">
    <interactant intactId="EBI-11742507">
        <id>Q8TAP4-4</id>
    </interactant>
    <interactant intactId="EBI-1050106">
        <id>O75934</id>
        <label>BCAS2</label>
    </interactant>
    <organismsDiffer>false</organismsDiffer>
    <experiments>5</experiments>
</comment>
<comment type="interaction">
    <interactant intactId="EBI-11742507">
        <id>Q8TAP4-4</id>
    </interactant>
    <interactant intactId="EBI-724373">
        <id>Q7L4P6</id>
        <label>BEND5</label>
    </interactant>
    <organismsDiffer>false</organismsDiffer>
    <experiments>3</experiments>
</comment>
<comment type="interaction">
    <interactant intactId="EBI-11742507">
        <id>Q8TAP4-4</id>
    </interactant>
    <interactant intactId="EBI-10181188">
        <id>Q8N7W2-2</id>
        <label>BEND7</label>
    </interactant>
    <organismsDiffer>false</organismsDiffer>
    <experiments>7</experiments>
</comment>
<comment type="interaction">
    <interactant intactId="EBI-11742507">
        <id>Q8TAP4-4</id>
    </interactant>
    <interactant intactId="EBI-711810">
        <id>O14503</id>
        <label>BHLHE40</label>
    </interactant>
    <organismsDiffer>false</organismsDiffer>
    <experiments>3</experiments>
</comment>
<comment type="interaction">
    <interactant intactId="EBI-11742507">
        <id>Q8TAP4-4</id>
    </interactant>
    <interactant intactId="EBI-2548012">
        <id>Q9H2G9</id>
        <label>BLZF1</label>
    </interactant>
    <organismsDiffer>false</organismsDiffer>
    <experiments>3</experiments>
</comment>
<comment type="interaction">
    <interactant intactId="EBI-11742507">
        <id>Q8TAP4-4</id>
    </interactant>
    <interactant intactId="EBI-6598617">
        <id>Q6PH81</id>
        <label>C16orf87</label>
    </interactant>
    <organismsDiffer>false</organismsDiffer>
    <experiments>3</experiments>
</comment>
<comment type="interaction">
    <interactant intactId="EBI-11742507">
        <id>Q8TAP4-4</id>
    </interactant>
    <interactant intactId="EBI-11530605">
        <id>Q9H257-2</id>
        <label>CARD9</label>
    </interactant>
    <organismsDiffer>false</organismsDiffer>
    <experiments>3</experiments>
</comment>
<comment type="interaction">
    <interactant intactId="EBI-11742507">
        <id>Q8TAP4-4</id>
    </interactant>
    <interactant intactId="EBI-17641690">
        <id>Q96HJ3-2</id>
        <label>CCDC34</label>
    </interactant>
    <organismsDiffer>false</organismsDiffer>
    <experiments>3</experiments>
</comment>
<comment type="interaction">
    <interactant intactId="EBI-11742507">
        <id>Q8TAP4-4</id>
    </interactant>
    <interactant intactId="EBI-720151">
        <id>Q96A33</id>
        <label>CCDC47</label>
    </interactant>
    <organismsDiffer>false</organismsDiffer>
    <experiments>3</experiments>
</comment>
<comment type="interaction">
    <interactant intactId="EBI-11742507">
        <id>Q8TAP4-4</id>
    </interactant>
    <interactant intactId="EBI-17967022">
        <id>Q96LY2-2</id>
        <label>CCDC74B</label>
    </interactant>
    <organismsDiffer>false</organismsDiffer>
    <experiments>3</experiments>
</comment>
<comment type="interaction">
    <interactant intactId="EBI-11742507">
        <id>Q8TAP4-4</id>
    </interactant>
    <interactant intactId="EBI-713148">
        <id>Q9GZT6</id>
        <label>CCDC90B</label>
    </interactant>
    <organismsDiffer>false</organismsDiffer>
    <experiments>3</experiments>
</comment>
<comment type="interaction">
    <interactant intactId="EBI-11742507">
        <id>Q8TAP4-4</id>
    </interactant>
    <interactant intactId="EBI-17793327">
        <id>Q9C0I3-2</id>
        <label>CCSER1</label>
    </interactant>
    <organismsDiffer>false</organismsDiffer>
    <experiments>3</experiments>
</comment>
<comment type="interaction">
    <interactant intactId="EBI-11742507">
        <id>Q8TAP4-4</id>
    </interactant>
    <interactant intactId="EBI-8467076">
        <id>Q8N8U2</id>
        <label>CDYL2</label>
    </interactant>
    <organismsDiffer>false</organismsDiffer>
    <experiments>3</experiments>
</comment>
<comment type="interaction">
    <interactant intactId="EBI-11742507">
        <id>Q8TAP4-4</id>
    </interactant>
    <interactant intactId="EBI-1210604">
        <id>Q7Z7K6</id>
        <label>CENPV</label>
    </interactant>
    <organismsDiffer>false</organismsDiffer>
    <experiments>3</experiments>
</comment>
<comment type="interaction">
    <interactant intactId="EBI-11742507">
        <id>Q8TAP4-4</id>
    </interactant>
    <interactant intactId="EBI-11752486">
        <id>Q86XR8-3</id>
        <label>CEP57</label>
    </interactant>
    <organismsDiffer>false</organismsDiffer>
    <experiments>3</experiments>
</comment>
<comment type="interaction">
    <interactant intactId="EBI-11742507">
        <id>Q8TAP4-4</id>
    </interactant>
    <interactant intactId="EBI-742887">
        <id>Q8TAP6</id>
        <label>CEP76</label>
    </interactant>
    <organismsDiffer>false</organismsDiffer>
    <experiments>3</experiments>
</comment>
<comment type="interaction">
    <interactant intactId="EBI-11742507">
        <id>Q8TAP4-4</id>
    </interactant>
    <interactant intactId="EBI-743375">
        <id>Q9NX63</id>
        <label>CHCHD3</label>
    </interactant>
    <organismsDiffer>false</organismsDiffer>
    <experiments>3</experiments>
</comment>
<comment type="interaction">
    <interactant intactId="EBI-11742507">
        <id>Q8TAP4-4</id>
    </interactant>
    <interactant intactId="EBI-372594">
        <id>Q99828</id>
        <label>CIB1</label>
    </interactant>
    <organismsDiffer>false</organismsDiffer>
    <experiments>3</experiments>
</comment>
<comment type="interaction">
    <interactant intactId="EBI-11742507">
        <id>Q8TAP4-4</id>
    </interactant>
    <interactant intactId="EBI-2116369">
        <id>P15169</id>
        <label>CPN1</label>
    </interactant>
    <organismsDiffer>false</organismsDiffer>
    <experiments>3</experiments>
</comment>
<comment type="interaction">
    <interactant intactId="EBI-11742507">
        <id>Q8TAP4-4</id>
    </interactant>
    <interactant intactId="EBI-2874283">
        <id>P43234</id>
        <label>CTSO</label>
    </interactant>
    <organismsDiffer>false</organismsDiffer>
    <experiments>3</experiments>
</comment>
<comment type="interaction">
    <interactant intactId="EBI-11742507">
        <id>Q8TAP4-4</id>
    </interactant>
    <interactant intactId="EBI-3867333">
        <id>A8MQ03</id>
        <label>CYSRT1</label>
    </interactant>
    <organismsDiffer>false</organismsDiffer>
    <experiments>3</experiments>
</comment>
<comment type="interaction">
    <interactant intactId="EBI-11742507">
        <id>Q8TAP4-4</id>
    </interactant>
    <interactant intactId="EBI-10303987">
        <id>Q9UHG0</id>
        <label>DCDC2</label>
    </interactant>
    <organismsDiffer>false</organismsDiffer>
    <experiments>3</experiments>
</comment>
<comment type="interaction">
    <interactant intactId="EBI-11742507">
        <id>Q8TAP4-4</id>
    </interactant>
    <interactant intactId="EBI-724515">
        <id>O95424</id>
        <label>DEXI</label>
    </interactant>
    <organismsDiffer>false</organismsDiffer>
    <experiments>3</experiments>
</comment>
<comment type="interaction">
    <interactant intactId="EBI-11742507">
        <id>Q8TAP4-4</id>
    </interactant>
    <interactant intactId="EBI-748674">
        <id>O43598</id>
        <label>DNPH1</label>
    </interactant>
    <organismsDiffer>false</organismsDiffer>
    <experiments>3</experiments>
</comment>
<comment type="interaction">
    <interactant intactId="EBI-11742507">
        <id>Q8TAP4-4</id>
    </interactant>
    <interactant intactId="EBI-6624459">
        <id>P21728</id>
        <label>DRD1</label>
    </interactant>
    <organismsDiffer>false</organismsDiffer>
    <experiments>3</experiments>
</comment>
<comment type="interaction">
    <interactant intactId="EBI-11742507">
        <id>Q8TAP4-4</id>
    </interactant>
    <interactant intactId="EBI-347740">
        <id>P60228</id>
        <label>EIF3E</label>
    </interactant>
    <organismsDiffer>false</organismsDiffer>
    <experiments>3</experiments>
</comment>
<comment type="interaction">
    <interactant intactId="EBI-11742507">
        <id>Q8TAP4-4</id>
    </interactant>
    <interactant intactId="EBI-25885343">
        <id>Q96J88-3</id>
        <label>EPSTI1</label>
    </interactant>
    <organismsDiffer>false</organismsDiffer>
    <experiments>3</experiments>
</comment>
<comment type="interaction">
    <interactant intactId="EBI-11742507">
        <id>Q8TAP4-4</id>
    </interactant>
    <interactant intactId="EBI-3864120">
        <id>Q8WUP2</id>
        <label>FBLIM1</label>
    </interactant>
    <organismsDiffer>false</organismsDiffer>
    <experiments>3</experiments>
</comment>
<comment type="interaction">
    <interactant intactId="EBI-11742507">
        <id>Q8TAP4-4</id>
    </interactant>
    <interactant intactId="EBI-25885364">
        <id>Q8IVH2-2</id>
        <label>FOXP4</label>
    </interactant>
    <organismsDiffer>false</organismsDiffer>
    <experiments>3</experiments>
</comment>
<comment type="interaction">
    <interactant intactId="EBI-11742507">
        <id>Q8TAP4-4</id>
    </interactant>
    <interactant intactId="EBI-13213391">
        <id>Q96NE9-2</id>
        <label>FRMD6</label>
    </interactant>
    <organismsDiffer>false</organismsDiffer>
    <experiments>3</experiments>
</comment>
<comment type="interaction">
    <interactant intactId="EBI-11742507">
        <id>Q8TAP4-4</id>
    </interactant>
    <interactant intactId="EBI-21017948">
        <id>O14926</id>
        <label>FSCN2</label>
    </interactant>
    <organismsDiffer>false</organismsDiffer>
    <experiments>3</experiments>
</comment>
<comment type="interaction">
    <interactant intactId="EBI-11742507">
        <id>Q8TAP4-4</id>
    </interactant>
    <interactant intactId="EBI-618189">
        <id>Q06547-2</id>
        <label>GABPB1</label>
    </interactant>
    <organismsDiffer>false</organismsDiffer>
    <experiments>3</experiments>
</comment>
<comment type="interaction">
    <interactant intactId="EBI-11742507">
        <id>Q8TAP4-4</id>
    </interactant>
    <interactant intactId="EBI-9088619">
        <id>Q06547-3</id>
        <label>GABPB1</label>
    </interactant>
    <organismsDiffer>false</organismsDiffer>
    <experiments>3</experiments>
</comment>
<comment type="interaction">
    <interactant intactId="EBI-11742507">
        <id>Q8TAP4-4</id>
    </interactant>
    <interactant intactId="EBI-21558069">
        <id>P19440-3</id>
        <label>GGT1</label>
    </interactant>
    <organismsDiffer>false</organismsDiffer>
    <experiments>3</experiments>
</comment>
<comment type="interaction">
    <interactant intactId="EBI-11742507">
        <id>Q8TAP4-4</id>
    </interactant>
    <interactant intactId="EBI-948296">
        <id>Q9UKD1</id>
        <label>GMEB2</label>
    </interactant>
    <organismsDiffer>false</organismsDiffer>
    <experiments>3</experiments>
</comment>
<comment type="interaction">
    <interactant intactId="EBI-11742507">
        <id>Q8TAP4-4</id>
    </interactant>
    <interactant intactId="EBI-7951023">
        <id>O95837</id>
        <label>GNA14</label>
    </interactant>
    <organismsDiffer>false</organismsDiffer>
    <experiments>3</experiments>
</comment>
<comment type="interaction">
    <interactant intactId="EBI-11742507">
        <id>Q8TAP4-4</id>
    </interactant>
    <interactant intactId="EBI-25902214">
        <id>Q96F32</id>
        <label>GNB5</label>
    </interactant>
    <organismsDiffer>false</organismsDiffer>
    <experiments>3</experiments>
</comment>
<comment type="interaction">
    <interactant intactId="EBI-11742507">
        <id>Q8TAP4-4</id>
    </interactant>
    <interactant intactId="EBI-618309">
        <id>Q08379</id>
        <label>GOLGA2</label>
    </interactant>
    <organismsDiffer>false</organismsDiffer>
    <experiments>5</experiments>
</comment>
<comment type="interaction">
    <interactant intactId="EBI-11742507">
        <id>Q8TAP4-4</id>
    </interactant>
    <interactant intactId="EBI-5916454">
        <id>A6NEM1</id>
        <label>GOLGA6L9</label>
    </interactant>
    <organismsDiffer>false</organismsDiffer>
    <experiments>3</experiments>
</comment>
<comment type="interaction">
    <interactant intactId="EBI-11742507">
        <id>Q8TAP4-4</id>
    </interactant>
    <interactant intactId="EBI-25884370">
        <id>O43292-2</id>
        <label>GPAA1</label>
    </interactant>
    <organismsDiffer>false</organismsDiffer>
    <experiments>3</experiments>
</comment>
<comment type="interaction">
    <interactant intactId="EBI-11742507">
        <id>Q8TAP4-4</id>
    </interactant>
    <interactant intactId="EBI-11959863">
        <id>Q9NWQ4-1</id>
        <label>GPATCH2L</label>
    </interactant>
    <organismsDiffer>false</organismsDiffer>
    <experiments>6</experiments>
</comment>
<comment type="interaction">
    <interactant intactId="EBI-11742507">
        <id>Q8TAP4-4</id>
    </interactant>
    <interactant intactId="EBI-25885139">
        <id>Q9UJ42</id>
        <label>GPR160</label>
    </interactant>
    <organismsDiffer>false</organismsDiffer>
    <experiments>3</experiments>
</comment>
<comment type="interaction">
    <interactant intactId="EBI-11742507">
        <id>Q8TAP4-4</id>
    </interactant>
    <interactant intactId="EBI-473189">
        <id>Q96D09</id>
        <label>GPRASP2</label>
    </interactant>
    <organismsDiffer>false</organismsDiffer>
    <experiments>3</experiments>
</comment>
<comment type="interaction">
    <interactant intactId="EBI-11742507">
        <id>Q8TAP4-4</id>
    </interactant>
    <interactant intactId="EBI-12353035">
        <id>Q13322-4</id>
        <label>GRB10</label>
    </interactant>
    <organismsDiffer>false</organismsDiffer>
    <experiments>3</experiments>
</comment>
<comment type="interaction">
    <interactant intactId="EBI-11742507">
        <id>Q8TAP4-4</id>
    </interactant>
    <interactant intactId="EBI-302023">
        <id>P62805</id>
        <label>H4C9</label>
    </interactant>
    <organismsDiffer>false</organismsDiffer>
    <experiments>3</experiments>
</comment>
<comment type="interaction">
    <interactant intactId="EBI-11742507">
        <id>Q8TAP4-4</id>
    </interactant>
    <interactant intactId="EBI-357001">
        <id>O00165</id>
        <label>HAX1</label>
    </interactant>
    <organismsDiffer>false</organismsDiffer>
    <experiments>3</experiments>
</comment>
<comment type="interaction">
    <interactant intactId="EBI-11742507">
        <id>Q8TAP4-4</id>
    </interactant>
    <interactant intactId="EBI-25858908">
        <id>Q8N7T0</id>
        <label>hCG_1820408</label>
    </interactant>
    <organismsDiffer>false</organismsDiffer>
    <experiments>3</experiments>
</comment>
<comment type="interaction">
    <interactant intactId="EBI-11742507">
        <id>Q8TAP4-4</id>
    </interactant>
    <interactant intactId="EBI-2549423">
        <id>Q6NT76</id>
        <label>HMBOX1</label>
    </interactant>
    <organismsDiffer>false</organismsDiffer>
    <experiments>3</experiments>
</comment>
<comment type="interaction">
    <interactant intactId="EBI-11742507">
        <id>Q8TAP4-4</id>
    </interactant>
    <interactant intactId="EBI-352986">
        <id>P52597</id>
        <label>HNRNPF</label>
    </interactant>
    <organismsDiffer>false</organismsDiffer>
    <experiments>3</experiments>
</comment>
<comment type="interaction">
    <interactant intactId="EBI-11742507">
        <id>Q8TAP4-4</id>
    </interactant>
    <interactant intactId="EBI-351590">
        <id>P31943</id>
        <label>HNRNPH1</label>
    </interactant>
    <organismsDiffer>false</organismsDiffer>
    <experiments>3</experiments>
</comment>
<comment type="interaction">
    <interactant intactId="EBI-11742507">
        <id>Q8TAP4-4</id>
    </interactant>
    <interactant intactId="EBI-11317274">
        <id>Q92826</id>
        <label>HOXB13</label>
    </interactant>
    <organismsDiffer>false</organismsDiffer>
    <experiments>3</experiments>
</comment>
<comment type="interaction">
    <interactant intactId="EBI-11742507">
        <id>Q8TAP4-4</id>
    </interactant>
    <interactant intactId="EBI-3923226">
        <id>P09017</id>
        <label>HOXC4</label>
    </interactant>
    <organismsDiffer>false</organismsDiffer>
    <experiments>3</experiments>
</comment>
<comment type="interaction">
    <interactant intactId="EBI-11742507">
        <id>Q8TAP4-4</id>
    </interactant>
    <interactant intactId="EBI-10223348">
        <id>Q03933-2</id>
        <label>HSF2</label>
    </interactant>
    <organismsDiffer>false</organismsDiffer>
    <experiments>3</experiments>
</comment>
<comment type="interaction">
    <interactant intactId="EBI-11742507">
        <id>Q8TAP4-4</id>
    </interactant>
    <interactant intactId="EBI-739395">
        <id>Q16082</id>
        <label>HSPB2</label>
    </interactant>
    <organismsDiffer>false</organismsDiffer>
    <experiments>3</experiments>
</comment>
<comment type="interaction">
    <interactant intactId="EBI-11742507">
        <id>Q8TAP4-4</id>
    </interactant>
    <interactant intactId="EBI-713450">
        <id>Q02363</id>
        <label>ID2</label>
    </interactant>
    <organismsDiffer>false</organismsDiffer>
    <experiments>3</experiments>
</comment>
<comment type="interaction">
    <interactant intactId="EBI-11742507">
        <id>Q8TAP4-4</id>
    </interactant>
    <interactant intactId="EBI-11944538">
        <id>Q96FT9-2</id>
        <label>IFT43</label>
    </interactant>
    <organismsDiffer>false</organismsDiffer>
    <experiments>3</experiments>
</comment>
<comment type="interaction">
    <interactant intactId="EBI-11742507">
        <id>Q8TAP4-4</id>
    </interactant>
    <interactant intactId="EBI-1055954">
        <id>P78318</id>
        <label>IGBP1</label>
    </interactant>
    <organismsDiffer>false</organismsDiffer>
    <experiments>3</experiments>
</comment>
<comment type="interaction">
    <interactant intactId="EBI-11742507">
        <id>Q8TAP4-4</id>
    </interactant>
    <interactant intactId="EBI-715709">
        <id>P17936</id>
        <label>IGFBP3</label>
    </interactant>
    <organismsDiffer>false</organismsDiffer>
    <experiments>3</experiments>
</comment>
<comment type="interaction">
    <interactant intactId="EBI-11742507">
        <id>Q8TAP4-4</id>
    </interactant>
    <interactant intactId="EBI-11522367">
        <id>Q13422-7</id>
        <label>IKZF1</label>
    </interactant>
    <organismsDiffer>false</organismsDiffer>
    <experiments>3</experiments>
</comment>
<comment type="interaction">
    <interactant intactId="EBI-11742507">
        <id>Q8TAP4-4</id>
    </interactant>
    <interactant intactId="EBI-17178971">
        <id>Q14005-2</id>
        <label>IL16</label>
    </interactant>
    <organismsDiffer>false</organismsDiffer>
    <experiments>3</experiments>
</comment>
<comment type="interaction">
    <interactant intactId="EBI-11742507">
        <id>Q8TAP4-4</id>
    </interactant>
    <interactant intactId="EBI-1757512">
        <id>P26951</id>
        <label>IL3RA</label>
    </interactant>
    <organismsDiffer>false</organismsDiffer>
    <experiments>3</experiments>
</comment>
<comment type="interaction">
    <interactant intactId="EBI-11742507">
        <id>Q8TAP4-4</id>
    </interactant>
    <interactant intactId="EBI-6509505">
        <id>Q0VD86</id>
        <label>INCA1</label>
    </interactant>
    <organismsDiffer>false</organismsDiffer>
    <experiments>5</experiments>
</comment>
<comment type="interaction">
    <interactant intactId="EBI-11742507">
        <id>Q8TAP4-4</id>
    </interactant>
    <interactant intactId="EBI-2556193">
        <id>Q63ZY3</id>
        <label>KANK2</label>
    </interactant>
    <organismsDiffer>false</organismsDiffer>
    <experiments>3</experiments>
</comment>
<comment type="interaction">
    <interactant intactId="EBI-11742507">
        <id>Q8TAP4-4</id>
    </interactant>
    <interactant intactId="EBI-9027502">
        <id>Q719H9</id>
        <label>KCTD1</label>
    </interactant>
    <organismsDiffer>false</organismsDiffer>
    <experiments>3</experiments>
</comment>
<comment type="interaction">
    <interactant intactId="EBI-11742507">
        <id>Q8TAP4-4</id>
    </interactant>
    <interactant intactId="EBI-743960">
        <id>Q8N5Z5</id>
        <label>KCTD17</label>
    </interactant>
    <organismsDiffer>false</organismsDiffer>
    <experiments>3</experiments>
</comment>
<comment type="interaction">
    <interactant intactId="EBI-11742507">
        <id>Q8TAP4-4</id>
    </interactant>
    <interactant intactId="EBI-12197879">
        <id>O00139-1</id>
        <label>KIF2A</label>
    </interactant>
    <organismsDiffer>false</organismsDiffer>
    <experiments>3</experiments>
</comment>
<comment type="interaction">
    <interactant intactId="EBI-11742507">
        <id>Q8TAP4-4</id>
    </interactant>
    <interactant intactId="EBI-750750">
        <id>Q9Y4X4</id>
        <label>KLF12</label>
    </interactant>
    <organismsDiffer>false</organismsDiffer>
    <experiments>3</experiments>
</comment>
<comment type="interaction">
    <interactant intactId="EBI-11742507">
        <id>Q8TAP4-4</id>
    </interactant>
    <interactant intactId="EBI-12893625">
        <id>Q5JUW0-3</id>
        <label>KRBOX4</label>
    </interactant>
    <organismsDiffer>false</organismsDiffer>
    <experiments>6</experiments>
</comment>
<comment type="interaction">
    <interactant intactId="EBI-11742507">
        <id>Q8TAP4-4</id>
    </interactant>
    <interactant intactId="EBI-948001">
        <id>Q15323</id>
        <label>KRT31</label>
    </interactant>
    <organismsDiffer>false</organismsDiffer>
    <experiments>3</experiments>
</comment>
<comment type="interaction">
    <interactant intactId="EBI-11742507">
        <id>Q8TAP4-4</id>
    </interactant>
    <interactant intactId="EBI-1047263">
        <id>O76015</id>
        <label>KRT38</label>
    </interactant>
    <organismsDiffer>false</organismsDiffer>
    <experiments>3</experiments>
</comment>
<comment type="interaction">
    <interactant intactId="EBI-11742507">
        <id>Q8TAP4-4</id>
    </interactant>
    <interactant intactId="EBI-9996449">
        <id>Q9BYR8</id>
        <label>KRTAP3-1</label>
    </interactant>
    <organismsDiffer>false</organismsDiffer>
    <experiments>3</experiments>
</comment>
<comment type="interaction">
    <interactant intactId="EBI-11742507">
        <id>Q8TAP4-4</id>
    </interactant>
    <interactant intactId="EBI-11979761">
        <id>Q86U70-2</id>
        <label>LDB1</label>
    </interactant>
    <organismsDiffer>false</organismsDiffer>
    <experiments>6</experiments>
</comment>
<comment type="interaction">
    <interactant intactId="EBI-11742507">
        <id>Q8TAP4-4</id>
    </interactant>
    <interactant intactId="EBI-2865580">
        <id>O43679</id>
        <label>LDB2</label>
    </interactant>
    <organismsDiffer>false</organismsDiffer>
    <experiments>5</experiments>
</comment>
<comment type="interaction">
    <interactant intactId="EBI-11742507">
        <id>Q8TAP4-4</id>
    </interactant>
    <interactant intactId="EBI-25835523">
        <id>Q9H2C1</id>
        <label>LHX5</label>
    </interactant>
    <organismsDiffer>false</organismsDiffer>
    <experiments>3</experiments>
</comment>
<comment type="interaction">
    <interactant intactId="EBI-11742507">
        <id>Q8TAP4-4</id>
    </interactant>
    <interactant intactId="EBI-12864460">
        <id>P48059-3</id>
        <label>LIMS1</label>
    </interactant>
    <organismsDiffer>false</organismsDiffer>
    <experiments>3</experiments>
</comment>
<comment type="interaction">
    <interactant intactId="EBI-11742507">
        <id>Q8TAP4-4</id>
    </interactant>
    <interactant intactId="EBI-727376">
        <id>Q9Y234</id>
        <label>LIPT1</label>
    </interactant>
    <organismsDiffer>false</organismsDiffer>
    <experiments>3</experiments>
</comment>
<comment type="interaction">
    <interactant intactId="EBI-11742507">
        <id>Q8TAP4-4</id>
    </interactant>
    <interactant intactId="EBI-11024283">
        <id>Q9C0E8-2</id>
        <label>LNPK</label>
    </interactant>
    <organismsDiffer>false</organismsDiffer>
    <experiments>3</experiments>
</comment>
<comment type="interaction">
    <interactant intactId="EBI-11742507">
        <id>Q8TAP4-4</id>
    </interactant>
    <interactant intactId="EBI-744222">
        <id>O60711</id>
        <label>LPXN</label>
    </interactant>
    <organismsDiffer>false</organismsDiffer>
    <experiments>3</experiments>
</comment>
<comment type="interaction">
    <interactant intactId="EBI-11742507">
        <id>Q8TAP4-4</id>
    </interactant>
    <interactant intactId="EBI-725780">
        <id>P51884</id>
        <label>LUM</label>
    </interactant>
    <organismsDiffer>false</organismsDiffer>
    <experiments>3</experiments>
</comment>
<comment type="interaction">
    <interactant intactId="EBI-11742507">
        <id>Q8TAP4-4</id>
    </interactant>
    <interactant intactId="EBI-1216080">
        <id>Q9Y250</id>
        <label>LZTS1</label>
    </interactant>
    <organismsDiffer>false</organismsDiffer>
    <experiments>3</experiments>
</comment>
<comment type="interaction">
    <interactant intactId="EBI-11742507">
        <id>Q8TAP4-4</id>
    </interactant>
    <interactant intactId="EBI-741037">
        <id>Q9BRK4</id>
        <label>LZTS2</label>
    </interactant>
    <organismsDiffer>false</organismsDiffer>
    <experiments>3</experiments>
</comment>
<comment type="interaction">
    <interactant intactId="EBI-11742507">
        <id>Q8TAP4-4</id>
    </interactant>
    <interactant intactId="EBI-2350695">
        <id>Q96GV9</id>
        <label>MACIR</label>
    </interactant>
    <organismsDiffer>false</organismsDiffer>
    <experiments>3</experiments>
</comment>
<comment type="interaction">
    <interactant intactId="EBI-11742507">
        <id>Q8TAP4-4</id>
    </interactant>
    <interactant intactId="EBI-742610">
        <id>Q9Y6D9</id>
        <label>MAD1L1</label>
    </interactant>
    <organismsDiffer>false</organismsDiffer>
    <experiments>3</experiments>
</comment>
<comment type="interaction">
    <interactant intactId="EBI-11742507">
        <id>Q8TAP4-4</id>
    </interactant>
    <interactant intactId="EBI-473834">
        <id>Q9H213</id>
        <label>MAGEH1</label>
    </interactant>
    <organismsDiffer>false</organismsDiffer>
    <experiments>3</experiments>
</comment>
<comment type="interaction">
    <interactant intactId="EBI-11742507">
        <id>Q8TAP4-4</id>
    </interactant>
    <interactant intactId="EBI-2339737">
        <id>Q96EH3</id>
        <label>MALSU1</label>
    </interactant>
    <organismsDiffer>false</organismsDiffer>
    <experiments>3</experiments>
</comment>
<comment type="interaction">
    <interactant intactId="EBI-11742507">
        <id>Q8TAP4-4</id>
    </interactant>
    <interactant intactId="EBI-3951604">
        <id>P80192</id>
        <label>MAP3K9</label>
    </interactant>
    <organismsDiffer>false</organismsDiffer>
    <experiments>3</experiments>
</comment>
<comment type="interaction">
    <interactant intactId="EBI-11742507">
        <id>Q8TAP4-4</id>
    </interactant>
    <interactant intactId="EBI-298304">
        <id>Q15759</id>
        <label>MAPK11</label>
    </interactant>
    <organismsDiffer>false</organismsDiffer>
    <experiments>3</experiments>
</comment>
<comment type="interaction">
    <interactant intactId="EBI-11742507">
        <id>Q8TAP4-4</id>
    </interactant>
    <interactant intactId="EBI-11978579">
        <id>O95983-2</id>
        <label>MBD3</label>
    </interactant>
    <organismsDiffer>false</organismsDiffer>
    <experiments>3</experiments>
</comment>
<comment type="interaction">
    <interactant intactId="EBI-11742507">
        <id>Q8TAP4-4</id>
    </interactant>
    <interactant intactId="EBI-12516603">
        <id>Q8WWY6</id>
        <label>MBD3L1</label>
    </interactant>
    <organismsDiffer>false</organismsDiffer>
    <experiments>3</experiments>
</comment>
<comment type="interaction">
    <interactant intactId="EBI-11742507">
        <id>Q8TAP4-4</id>
    </interactant>
    <interactant intactId="EBI-13288755">
        <id>A0JLT2-2</id>
        <label>MED19</label>
    </interactant>
    <organismsDiffer>false</organismsDiffer>
    <experiments>3</experiments>
</comment>
<comment type="interaction">
    <interactant intactId="EBI-11742507">
        <id>Q8TAP4-4</id>
    </interactant>
    <interactant intactId="EBI-18582591">
        <id>Q99687-3</id>
        <label>MEIS3</label>
    </interactant>
    <organismsDiffer>false</organismsDiffer>
    <experiments>3</experiments>
</comment>
<comment type="interaction">
    <interactant intactId="EBI-11742507">
        <id>Q8TAP4-4</id>
    </interactant>
    <interactant intactId="EBI-10172526">
        <id>Q9UJV3-2</id>
        <label>MID2</label>
    </interactant>
    <organismsDiffer>false</organismsDiffer>
    <experiments>3</experiments>
</comment>
<comment type="interaction">
    <interactant intactId="EBI-11742507">
        <id>Q8TAP4-4</id>
    </interactant>
    <interactant intactId="EBI-2829677">
        <id>P41218</id>
        <label>MNDA</label>
    </interactant>
    <organismsDiffer>false</organismsDiffer>
    <experiments>3</experiments>
</comment>
<comment type="interaction">
    <interactant intactId="EBI-11742507">
        <id>Q8TAP4-4</id>
    </interactant>
    <interactant intactId="EBI-11109389">
        <id>Q8N983-3</id>
        <label>MRPL43</label>
    </interactant>
    <organismsDiffer>false</organismsDiffer>
    <experiments>3</experiments>
</comment>
<comment type="interaction">
    <interactant intactId="EBI-11742507">
        <id>Q8TAP4-4</id>
    </interactant>
    <interactant intactId="EBI-11522433">
        <id>Q5JR59-3</id>
        <label>MTUS2</label>
    </interactant>
    <organismsDiffer>false</organismsDiffer>
    <experiments>3</experiments>
</comment>
<comment type="interaction">
    <interactant intactId="EBI-11742507">
        <id>Q8TAP4-4</id>
    </interactant>
    <interactant intactId="EBI-3906629">
        <id>P15173</id>
        <label>MYOG</label>
    </interactant>
    <organismsDiffer>false</organismsDiffer>
    <experiments>3</experiments>
</comment>
<comment type="interaction">
    <interactant intactId="EBI-11742507">
        <id>Q8TAP4-4</id>
    </interactant>
    <interactant intactId="EBI-5662487">
        <id>Q8TDC0</id>
        <label>MYOZ3</label>
    </interactant>
    <organismsDiffer>false</organismsDiffer>
    <experiments>3</experiments>
</comment>
<comment type="interaction">
    <interactant intactId="EBI-11742507">
        <id>Q8TAP4-4</id>
    </interactant>
    <interactant intactId="EBI-10249760">
        <id>Q9UHB4</id>
        <label>NDOR1</label>
    </interactant>
    <organismsDiffer>false</organismsDiffer>
    <experiments>3</experiments>
</comment>
<comment type="interaction">
    <interactant intactId="EBI-11742507">
        <id>Q8TAP4-4</id>
    </interactant>
    <interactant intactId="EBI-746417">
        <id>Q16718</id>
        <label>NDUFA5</label>
    </interactant>
    <organismsDiffer>false</organismsDiffer>
    <experiments>3</experiments>
</comment>
<comment type="interaction">
    <interactant intactId="EBI-11742507">
        <id>Q8TAP4-4</id>
    </interactant>
    <interactant intactId="EBI-748312">
        <id>P49821</id>
        <label>NDUFV1</label>
    </interactant>
    <organismsDiffer>false</organismsDiffer>
    <experiments>3</experiments>
</comment>
<comment type="interaction">
    <interactant intactId="EBI-11742507">
        <id>Q8TAP4-4</id>
    </interactant>
    <interactant intactId="EBI-10271199">
        <id>Q8NI38</id>
        <label>NFKBID</label>
    </interactant>
    <organismsDiffer>false</organismsDiffer>
    <experiments>3</experiments>
</comment>
<comment type="interaction">
    <interactant intactId="EBI-11742507">
        <id>Q8TAP4-4</id>
    </interactant>
    <interactant intactId="EBI-740897">
        <id>Q9GZT8</id>
        <label>NIF3L1</label>
    </interactant>
    <organismsDiffer>false</organismsDiffer>
    <experiments>3</experiments>
</comment>
<comment type="interaction">
    <interactant intactId="EBI-11742507">
        <id>Q8TAP4-4</id>
    </interactant>
    <interactant intactId="EBI-741158">
        <id>Q96HA8</id>
        <label>NTAQ1</label>
    </interactant>
    <organismsDiffer>false</organismsDiffer>
    <experiments>3</experiments>
</comment>
<comment type="interaction">
    <interactant intactId="EBI-11742507">
        <id>Q8TAP4-4</id>
    </interactant>
    <interactant intactId="EBI-9978021">
        <id>Q2M1J6</id>
        <label>OXA1L</label>
    </interactant>
    <organismsDiffer>false</organismsDiffer>
    <experiments>3</experiments>
</comment>
<comment type="interaction">
    <interactant intactId="EBI-11742507">
        <id>Q8TAP4-4</id>
    </interactant>
    <interactant intactId="EBI-359462">
        <id>Q16342</id>
        <label>PDCD2</label>
    </interactant>
    <organismsDiffer>false</organismsDiffer>
    <experiments>3</experiments>
</comment>
<comment type="interaction">
    <interactant intactId="EBI-11742507">
        <id>Q8TAP4-4</id>
    </interactant>
    <interactant intactId="EBI-1043580">
        <id>Q9BRX2</id>
        <label>PELO</label>
    </interactant>
    <organismsDiffer>false</organismsDiffer>
    <experiments>9</experiments>
</comment>
<comment type="interaction">
    <interactant intactId="EBI-11742507">
        <id>Q8TAP4-4</id>
    </interactant>
    <interactant intactId="EBI-2803703">
        <id>Q9Y6X2</id>
        <label>PIAS3</label>
    </interactant>
    <organismsDiffer>false</organismsDiffer>
    <experiments>3</experiments>
</comment>
<comment type="interaction">
    <interactant intactId="EBI-11742507">
        <id>Q8TAP4-4</id>
    </interactant>
    <interactant intactId="EBI-79165">
        <id>Q9NRD5</id>
        <label>PICK1</label>
    </interactant>
    <organismsDiffer>false</organismsDiffer>
    <experiments>3</experiments>
</comment>
<comment type="interaction">
    <interactant intactId="EBI-11742507">
        <id>Q8TAP4-4</id>
    </interactant>
    <interactant intactId="EBI-6164623">
        <id>Q86T03</id>
        <label>PIP4P1</label>
    </interactant>
    <organismsDiffer>false</organismsDiffer>
    <experiments>3</experiments>
</comment>
<comment type="interaction">
    <interactant intactId="EBI-11742507">
        <id>Q8TAP4-4</id>
    </interactant>
    <interactant intactId="EBI-10694821">
        <id>Q6P1J6-2</id>
        <label>PLB1</label>
    </interactant>
    <organismsDiffer>false</organismsDiffer>
    <experiments>3</experiments>
</comment>
<comment type="interaction">
    <interactant intactId="EBI-11742507">
        <id>Q8TAP4-4</id>
    </interactant>
    <interactant intactId="EBI-302345">
        <id>Q8ND90</id>
        <label>PNMA1</label>
    </interactant>
    <organismsDiffer>false</organismsDiffer>
    <experiments>5</experiments>
</comment>
<comment type="interaction">
    <interactant intactId="EBI-11742507">
        <id>Q8TAP4-4</id>
    </interactant>
    <interactant intactId="EBI-741774">
        <id>Q9UNA4</id>
        <label>POLI</label>
    </interactant>
    <organismsDiffer>false</organismsDiffer>
    <experiments>3</experiments>
</comment>
<comment type="interaction">
    <interactant intactId="EBI-11742507">
        <id>Q8TAP4-4</id>
    </interactant>
    <interactant intactId="EBI-12029004">
        <id>P78424</id>
        <label>POU6F2</label>
    </interactant>
    <organismsDiffer>false</organismsDiffer>
    <experiments>3</experiments>
</comment>
<comment type="interaction">
    <interactant intactId="EBI-11742507">
        <id>Q8TAP4-4</id>
    </interactant>
    <interactant intactId="EBI-1105153">
        <id>Q96KQ4</id>
        <label>PPP1R13B</label>
    </interactant>
    <organismsDiffer>false</organismsDiffer>
    <experiments>3</experiments>
</comment>
<comment type="interaction">
    <interactant intactId="EBI-11742507">
        <id>Q8TAP4-4</id>
    </interactant>
    <interactant intactId="EBI-2803380">
        <id>P07225</id>
        <label>PROS1</label>
    </interactant>
    <organismsDiffer>false</organismsDiffer>
    <experiments>3</experiments>
</comment>
<comment type="interaction">
    <interactant intactId="EBI-11742507">
        <id>Q8TAP4-4</id>
    </interactant>
    <interactant intactId="EBI-11954250">
        <id>P49023-2</id>
        <label>PXN</label>
    </interactant>
    <organismsDiffer>false</organismsDiffer>
    <experiments>3</experiments>
</comment>
<comment type="interaction">
    <interactant intactId="EBI-11742507">
        <id>Q8TAP4-4</id>
    </interactant>
    <interactant intactId="EBI-2798044">
        <id>Q2TAL8</id>
        <label>QRICH1</label>
    </interactant>
    <organismsDiffer>false</organismsDiffer>
    <experiments>3</experiments>
</comment>
<comment type="interaction">
    <interactant intactId="EBI-11742507">
        <id>Q8TAP4-4</id>
    </interactant>
    <interactant intactId="EBI-25885259">
        <id>Q3YEC7-3</id>
        <label>RABL6</label>
    </interactant>
    <organismsDiffer>false</organismsDiffer>
    <experiments>3</experiments>
</comment>
<comment type="interaction">
    <interactant intactId="EBI-11742507">
        <id>Q8TAP4-4</id>
    </interactant>
    <interactant intactId="EBI-2117080">
        <id>Q96I51</id>
        <label>RCC1L</label>
    </interactant>
    <organismsDiffer>false</organismsDiffer>
    <experiments>3</experiments>
</comment>
<comment type="interaction">
    <interactant intactId="EBI-11742507">
        <id>Q8TAP4-4</id>
    </interactant>
    <interactant intactId="EBI-948278">
        <id>Q15293</id>
        <label>RCN1</label>
    </interactant>
    <organismsDiffer>false</organismsDiffer>
    <experiments>3</experiments>
</comment>
<comment type="interaction">
    <interactant intactId="EBI-11742507">
        <id>Q8TAP4-4</id>
    </interactant>
    <interactant intactId="EBI-712376">
        <id>P40937</id>
        <label>RFC5</label>
    </interactant>
    <organismsDiffer>false</organismsDiffer>
    <experiments>3</experiments>
</comment>
<comment type="interaction">
    <interactant intactId="EBI-11742507">
        <id>Q8TAP4-4</id>
    </interactant>
    <interactant intactId="EBI-6426999">
        <id>O94844</id>
        <label>RHOBTB1</label>
    </interactant>
    <organismsDiffer>false</organismsDiffer>
    <experiments>3</experiments>
</comment>
<comment type="interaction">
    <interactant intactId="EBI-11742507">
        <id>Q8TAP4-4</id>
    </interactant>
    <interactant intactId="EBI-3909436">
        <id>Q9UJD0</id>
        <label>RIMS3</label>
    </interactant>
    <organismsDiffer>false</organismsDiffer>
    <experiments>3</experiments>
</comment>
<comment type="interaction">
    <interactant intactId="EBI-11742507">
        <id>Q8TAP4-4</id>
    </interactant>
    <interactant intactId="EBI-25884400">
        <id>Q9NWS8-3</id>
        <label>RMND1</label>
    </interactant>
    <organismsDiffer>false</organismsDiffer>
    <experiments>3</experiments>
</comment>
<comment type="interaction">
    <interactant intactId="EBI-11742507">
        <id>Q8TAP4-4</id>
    </interactant>
    <interactant intactId="EBI-723587">
        <id>Q9Y508</id>
        <label>RNF114</label>
    </interactant>
    <organismsDiffer>false</organismsDiffer>
    <experiments>3</experiments>
</comment>
<comment type="interaction">
    <interactant intactId="EBI-11742507">
        <id>Q8TAP4-4</id>
    </interactant>
    <interactant intactId="EBI-36513929">
        <id>Q9ULK6-3</id>
        <label>RNF150</label>
    </interactant>
    <organismsDiffer>false</organismsDiffer>
    <experiments>3</experiments>
</comment>
<comment type="interaction">
    <interactant intactId="EBI-11742507">
        <id>Q8TAP4-4</id>
    </interactant>
    <interactant intactId="EBI-11027771">
        <id>P62913-2</id>
        <label>RPL11</label>
    </interactant>
    <organismsDiffer>false</organismsDiffer>
    <experiments>3</experiments>
</comment>
<comment type="interaction">
    <interactant intactId="EBI-11742507">
        <id>Q8TAP4-4</id>
    </interactant>
    <interactant intactId="EBI-353383">
        <id>P18077</id>
        <label>RPL35A</label>
    </interactant>
    <organismsDiffer>false</organismsDiffer>
    <experiments>3</experiments>
</comment>
<comment type="interaction">
    <interactant intactId="EBI-11742507">
        <id>Q8TAP4-4</id>
    </interactant>
    <interactant intactId="EBI-1224539">
        <id>Q99643</id>
        <label>SDHC</label>
    </interactant>
    <organismsDiffer>false</organismsDiffer>
    <experiments>3</experiments>
</comment>
<comment type="interaction">
    <interactant intactId="EBI-11742507">
        <id>Q8TAP4-4</id>
    </interactant>
    <interactant intactId="EBI-745901">
        <id>Q14141</id>
        <label>SEPTIN6</label>
    </interactant>
    <organismsDiffer>false</organismsDiffer>
    <experiments>3</experiments>
</comment>
<comment type="interaction">
    <interactant intactId="EBI-11742507">
        <id>Q8TAP4-4</id>
    </interactant>
    <interactant intactId="EBI-7481343">
        <id>Q01105-2</id>
        <label>SET</label>
    </interactant>
    <organismsDiffer>false</organismsDiffer>
    <experiments>3</experiments>
</comment>
<comment type="interaction">
    <interactant intactId="EBI-11742507">
        <id>Q8TAP4-4</id>
    </interactant>
    <interactant intactId="EBI-19952306">
        <id>O14492-2</id>
        <label>SH2B2</label>
    </interactant>
    <organismsDiffer>false</organismsDiffer>
    <experiments>3</experiments>
</comment>
<comment type="interaction">
    <interactant intactId="EBI-11742507">
        <id>Q8TAP4-4</id>
    </interactant>
    <interactant intactId="EBI-12037847">
        <id>Q6ZSJ9</id>
        <label>SHISA6</label>
    </interactant>
    <organismsDiffer>false</organismsDiffer>
    <experiments>3</experiments>
</comment>
<comment type="interaction">
    <interactant intactId="EBI-11742507">
        <id>Q8TAP4-4</id>
    </interactant>
    <interactant intactId="EBI-10269374">
        <id>Q8ND83</id>
        <label>SLAIN1</label>
    </interactant>
    <organismsDiffer>false</organismsDiffer>
    <experiments>3</experiments>
</comment>
<comment type="interaction">
    <interactant intactId="EBI-11742507">
        <id>Q8TAP4-4</id>
    </interactant>
    <interactant intactId="EBI-632715">
        <id>Q13573</id>
        <label>SNW1</label>
    </interactant>
    <organismsDiffer>false</organismsDiffer>
    <experiments>3</experiments>
</comment>
<comment type="interaction">
    <interactant intactId="EBI-11742507">
        <id>Q8TAP4-4</id>
    </interactant>
    <interactant intactId="EBI-10329478">
        <id>Q9Y5X0</id>
        <label>SNX10</label>
    </interactant>
    <organismsDiffer>false</organismsDiffer>
    <experiments>3</experiments>
</comment>
<comment type="interaction">
    <interactant intactId="EBI-11742507">
        <id>Q8TAP4-4</id>
    </interactant>
    <interactant intactId="EBI-2481535">
        <id>Q8WV41</id>
        <label>SNX33</label>
    </interactant>
    <organismsDiffer>false</organismsDiffer>
    <experiments>3</experiments>
</comment>
<comment type="interaction">
    <interactant intactId="EBI-11742507">
        <id>Q8TAP4-4</id>
    </interactant>
    <interactant intactId="EBI-1167533">
        <id>P56693</id>
        <label>SOX10</label>
    </interactant>
    <organismsDiffer>false</organismsDiffer>
    <experiments>3</experiments>
</comment>
<comment type="interaction">
    <interactant intactId="EBI-11742507">
        <id>Q8TAP4-4</id>
    </interactant>
    <interactant intactId="EBI-25868254">
        <id>Q9BRW5</id>
        <label>SP2</label>
    </interactant>
    <organismsDiffer>false</organismsDiffer>
    <experiments>3</experiments>
</comment>
<comment type="interaction">
    <interactant intactId="EBI-11742507">
        <id>Q8TAP4-4</id>
    </interactant>
    <interactant intactId="EBI-448878">
        <id>Q13586</id>
        <label>STIM1</label>
    </interactant>
    <organismsDiffer>false</organismsDiffer>
    <experiments>3</experiments>
</comment>
<comment type="interaction">
    <interactant intactId="EBI-11742507">
        <id>Q8TAP4-4</id>
    </interactant>
    <interactant intactId="EBI-1053876">
        <id>Q13033-2</id>
        <label>STRN3</label>
    </interactant>
    <organismsDiffer>false</organismsDiffer>
    <experiments>3</experiments>
</comment>
<comment type="interaction">
    <interactant intactId="EBI-11742507">
        <id>Q8TAP4-4</id>
    </interactant>
    <interactant intactId="EBI-11321949">
        <id>O43761</id>
        <label>SYNGR3</label>
    </interactant>
    <organismsDiffer>false</organismsDiffer>
    <experiments>3</experiments>
</comment>
<comment type="interaction">
    <interactant intactId="EBI-11742507">
        <id>Q8TAP4-4</id>
    </interactant>
    <interactant intactId="EBI-533224">
        <id>P15884</id>
        <label>TCF4</label>
    </interactant>
    <organismsDiffer>false</organismsDiffer>
    <experiments>3</experiments>
</comment>
<comment type="interaction">
    <interactant intactId="EBI-11742507">
        <id>Q8TAP4-4</id>
    </interactant>
    <interactant intactId="EBI-3923210">
        <id>Q8TDR4</id>
        <label>TCP10L</label>
    </interactant>
    <organismsDiffer>false</organismsDiffer>
    <experiments>3</experiments>
</comment>
<comment type="interaction">
    <interactant intactId="EBI-11742507">
        <id>Q8TAP4-4</id>
    </interactant>
    <interactant intactId="EBI-11139477">
        <id>Q96N21</id>
        <label>TEPSIN</label>
    </interactant>
    <organismsDiffer>false</organismsDiffer>
    <experiments>3</experiments>
</comment>
<comment type="interaction">
    <interactant intactId="EBI-11742507">
        <id>Q8TAP4-4</id>
    </interactant>
    <interactant intactId="EBI-725275">
        <id>Q92481</id>
        <label>TFAP2B</label>
    </interactant>
    <organismsDiffer>false</organismsDiffer>
    <experiments>3</experiments>
</comment>
<comment type="interaction">
    <interactant intactId="EBI-11742507">
        <id>Q8TAP4-4</id>
    </interactant>
    <interactant intactId="EBI-741515">
        <id>Q9NVV9</id>
        <label>THAP1</label>
    </interactant>
    <organismsDiffer>false</organismsDiffer>
    <experiments>3</experiments>
</comment>
<comment type="interaction">
    <interactant intactId="EBI-11742507">
        <id>Q8TAP4-4</id>
    </interactant>
    <interactant intactId="EBI-12155101">
        <id>Q9BTD3</id>
        <label>TMEM121</label>
    </interactant>
    <organismsDiffer>false</organismsDiffer>
    <experiments>3</experiments>
</comment>
<comment type="interaction">
    <interactant intactId="EBI-11742507">
        <id>Q8TAP4-4</id>
    </interactant>
    <interactant intactId="EBI-2821479">
        <id>Q3YBM2</id>
        <label>TMEM176B</label>
    </interactant>
    <organismsDiffer>false</organismsDiffer>
    <experiments>3</experiments>
</comment>
<comment type="interaction">
    <interactant intactId="EBI-11742507">
        <id>Q8TAP4-4</id>
    </interactant>
    <interactant intactId="EBI-3922833">
        <id>Q969K7</id>
        <label>TMEM54</label>
    </interactant>
    <organismsDiffer>false</organismsDiffer>
    <experiments>3</experiments>
</comment>
<comment type="interaction">
    <interactant intactId="EBI-11742507">
        <id>Q8TAP4-4</id>
    </interactant>
    <interactant intactId="EBI-1390168">
        <id>Q9H8H3</id>
        <label>TMT1A</label>
    </interactant>
    <organismsDiffer>false</organismsDiffer>
    <experiments>3</experiments>
</comment>
<comment type="interaction">
    <interactant intactId="EBI-11742507">
        <id>Q8TAP4-4</id>
    </interactant>
    <interactant intactId="EBI-25902017">
        <id>P51580</id>
        <label>TPMT</label>
    </interactant>
    <organismsDiffer>false</organismsDiffer>
    <experiments>3</experiments>
</comment>
<comment type="interaction">
    <interactant intactId="EBI-11742507">
        <id>Q8TAP4-4</id>
    </interactant>
    <interactant intactId="EBI-11119202">
        <id>Q9UL33-2</id>
        <label>TRAPPC2L</label>
    </interactant>
    <organismsDiffer>false</organismsDiffer>
    <experiments>3</experiments>
</comment>
<comment type="interaction">
    <interactant intactId="EBI-11742507">
        <id>Q8TAP4-4</id>
    </interactant>
    <interactant intactId="EBI-492476">
        <id>Q96RU7</id>
        <label>TRIB3</label>
    </interactant>
    <organismsDiffer>false</organismsDiffer>
    <experiments>3</experiments>
</comment>
<comment type="interaction">
    <interactant intactId="EBI-11742507">
        <id>Q8TAP4-4</id>
    </interactant>
    <interactant intactId="EBI-740098">
        <id>P36406</id>
        <label>TRIM23</label>
    </interactant>
    <organismsDiffer>false</organismsDiffer>
    <experiments>3</experiments>
</comment>
<comment type="interaction">
    <interactant intactId="EBI-11742507">
        <id>Q8TAP4-4</id>
    </interactant>
    <interactant intactId="EBI-2130429">
        <id>Q9BYV2</id>
        <label>TRIM54</label>
    </interactant>
    <organismsDiffer>false</organismsDiffer>
    <experiments>3</experiments>
</comment>
<comment type="interaction">
    <interactant intactId="EBI-11742507">
        <id>Q8TAP4-4</id>
    </interactant>
    <interactant intactId="EBI-934061">
        <id>Q9UJA5</id>
        <label>TRMT6</label>
    </interactant>
    <organismsDiffer>false</organismsDiffer>
    <experiments>3</experiments>
</comment>
<comment type="interaction">
    <interactant intactId="EBI-11742507">
        <id>Q8TAP4-4</id>
    </interactant>
    <interactant intactId="EBI-21353855">
        <id>Q99598</id>
        <label>TSNAX</label>
    </interactant>
    <organismsDiffer>false</organismsDiffer>
    <experiments>3</experiments>
</comment>
<comment type="interaction">
    <interactant intactId="EBI-11742507">
        <id>Q8TAP4-4</id>
    </interactant>
    <interactant intactId="EBI-2557363">
        <id>Q9NNX1</id>
        <label>TUFT1</label>
    </interactant>
    <organismsDiffer>false</organismsDiffer>
    <experiments>3</experiments>
</comment>
<comment type="interaction">
    <interactant intactId="EBI-11742507">
        <id>Q8TAP4-4</id>
    </interactant>
    <interactant intactId="EBI-2512509">
        <id>Q8NB14</id>
        <label>USP38</label>
    </interactant>
    <organismsDiffer>false</organismsDiffer>
    <experiments>3</experiments>
</comment>
<comment type="interaction">
    <interactant intactId="EBI-11742507">
        <id>Q8TAP4-4</id>
    </interactant>
    <interactant intactId="EBI-11975223">
        <id>Q70EL1-9</id>
        <label>USP54</label>
    </interactant>
    <organismsDiffer>false</organismsDiffer>
    <experiments>3</experiments>
</comment>
<comment type="interaction">
    <interactant intactId="EBI-11742507">
        <id>Q8TAP4-4</id>
    </interactant>
    <interactant intactId="EBI-722343">
        <id>Q15836</id>
        <label>VAMP3</label>
    </interactant>
    <organismsDiffer>false</organismsDiffer>
    <experiments>3</experiments>
</comment>
<comment type="interaction">
    <interactant intactId="EBI-11742507">
        <id>Q8TAP4-4</id>
    </interactant>
    <interactant intactId="EBI-357430">
        <id>P61758</id>
        <label>VBP1</label>
    </interactant>
    <organismsDiffer>false</organismsDiffer>
    <experiments>3</experiments>
</comment>
<comment type="interaction">
    <interactant intactId="EBI-11742507">
        <id>Q8TAP4-4</id>
    </interactant>
    <interactant intactId="EBI-2803134">
        <id>Q2NL98</id>
        <label>VMAC</label>
    </interactant>
    <organismsDiffer>false</organismsDiffer>
    <experiments>3</experiments>
</comment>
<comment type="interaction">
    <interactant intactId="EBI-11742507">
        <id>Q8TAP4-4</id>
    </interactant>
    <interactant intactId="EBI-21494555">
        <id>O95498</id>
        <label>VNN2</label>
    </interactant>
    <organismsDiffer>false</organismsDiffer>
    <experiments>3</experiments>
</comment>
<comment type="interaction">
    <interactant intactId="EBI-11742507">
        <id>Q8TAP4-4</id>
    </interactant>
    <interactant intactId="EBI-12146727">
        <id>Q9UK41-2</id>
        <label>VPS28</label>
    </interactant>
    <organismsDiffer>false</organismsDiffer>
    <experiments>3</experiments>
</comment>
<comment type="interaction">
    <interactant intactId="EBI-11742507">
        <id>Q8TAP4-4</id>
    </interactant>
    <interactant intactId="EBI-12040603">
        <id>Q9NZC7-5</id>
        <label>WWOX</label>
    </interactant>
    <organismsDiffer>false</organismsDiffer>
    <experiments>6</experiments>
</comment>
<comment type="interaction">
    <interactant intactId="EBI-11742507">
        <id>Q8TAP4-4</id>
    </interactant>
    <interactant intactId="EBI-740718">
        <id>O43298</id>
        <label>ZBTB43</label>
    </interactant>
    <organismsDiffer>false</organismsDiffer>
    <experiments>3</experiments>
</comment>
<comment type="interaction">
    <interactant intactId="EBI-11742507">
        <id>Q8TAP4-4</id>
    </interactant>
    <interactant intactId="EBI-17494306">
        <id>Q8NAP8</id>
        <label>ZBTB8B</label>
    </interactant>
    <organismsDiffer>false</organismsDiffer>
    <experiments>3</experiments>
</comment>
<comment type="interaction">
    <interactant intactId="EBI-11742507">
        <id>Q8TAP4-4</id>
    </interactant>
    <interactant intactId="EBI-14104088">
        <id>Q53FD0-2</id>
        <label>ZC2HC1C</label>
    </interactant>
    <organismsDiffer>false</organismsDiffer>
    <experiments>3</experiments>
</comment>
<comment type="interaction">
    <interactant intactId="EBI-11742507">
        <id>Q8TAP4-4</id>
    </interactant>
    <interactant intactId="EBI-2849569">
        <id>Q9BQ24</id>
        <label>ZFYVE21</label>
    </interactant>
    <organismsDiffer>false</organismsDiffer>
    <experiments>3</experiments>
</comment>
<comment type="interaction">
    <interactant intactId="EBI-11742507">
        <id>Q8TAP4-4</id>
    </interactant>
    <interactant intactId="EBI-18199075">
        <id>Q96PE6</id>
        <label>ZIM3</label>
    </interactant>
    <organismsDiffer>false</organismsDiffer>
    <experiments>3</experiments>
</comment>
<comment type="interaction">
    <interactant intactId="EBI-11742507">
        <id>Q8TAP4-4</id>
    </interactant>
    <interactant intactId="EBI-2602314">
        <id>Q15776</id>
        <label>ZKSCAN8</label>
    </interactant>
    <organismsDiffer>false</organismsDiffer>
    <experiments>3</experiments>
</comment>
<comment type="interaction">
    <interactant intactId="EBI-11742507">
        <id>Q8TAP4-4</id>
    </interactant>
    <interactant intactId="EBI-2556139">
        <id>Q14202</id>
        <label>ZMYM3</label>
    </interactant>
    <organismsDiffer>false</organismsDiffer>
    <experiments>3</experiments>
</comment>
<comment type="interaction">
    <interactant intactId="EBI-11742507">
        <id>Q8TAP4-4</id>
    </interactant>
    <interactant intactId="EBI-2849334">
        <id>P52747</id>
        <label>ZNF143</label>
    </interactant>
    <organismsDiffer>false</organismsDiffer>
    <experiments>3</experiments>
</comment>
<comment type="interaction">
    <interactant intactId="EBI-11742507">
        <id>Q8TAP4-4</id>
    </interactant>
    <interactant intactId="EBI-25835471">
        <id>Q05CR2</id>
        <label>ZNF248</label>
    </interactant>
    <organismsDiffer>false</organismsDiffer>
    <experiments>3</experiments>
</comment>
<comment type="interaction">
    <interactant intactId="EBI-11742507">
        <id>Q8TAP4-4</id>
    </interactant>
    <interactant intactId="EBI-2462313">
        <id>Q9UL40</id>
        <label>ZNF346</label>
    </interactant>
    <organismsDiffer>false</organismsDiffer>
    <experiments>3</experiments>
</comment>
<comment type="interaction">
    <interactant intactId="EBI-11742507">
        <id>Q8TAP4-4</id>
    </interactant>
    <interactant intactId="EBI-12010736">
        <id>Q8N0Y2-2</id>
        <label>ZNF444</label>
    </interactant>
    <organismsDiffer>false</organismsDiffer>
    <experiments>3</experiments>
</comment>
<comment type="interaction">
    <interactant intactId="EBI-11742507">
        <id>Q8TAP4-4</id>
    </interactant>
    <interactant intactId="EBI-11035148">
        <id>Q8TF50</id>
        <label>ZNF526</label>
    </interactant>
    <organismsDiffer>false</organismsDiffer>
    <experiments>3</experiments>
</comment>
<comment type="interaction">
    <interactant intactId="EBI-11742507">
        <id>Q8TAP4-4</id>
    </interactant>
    <interactant intactId="EBI-6427977">
        <id>Q96SQ5</id>
        <label>ZNF587</label>
    </interactant>
    <organismsDiffer>false</organismsDiffer>
    <experiments>3</experiments>
</comment>
<comment type="interaction">
    <interactant intactId="EBI-11742507">
        <id>Q8TAP4-4</id>
    </interactant>
    <interactant intactId="EBI-4395669">
        <id>Q6ZNG0</id>
        <label>ZNF620</label>
    </interactant>
    <organismsDiffer>false</organismsDiffer>
    <experiments>3</experiments>
</comment>
<comment type="interaction">
    <interactant intactId="EBI-11742507">
        <id>Q8TAP4-4</id>
    </interactant>
    <interactant intactId="EBI-12939666">
        <id>Q96N77-2</id>
        <label>ZNF641</label>
    </interactant>
    <organismsDiffer>false</organismsDiffer>
    <experiments>3</experiments>
</comment>
<comment type="interaction">
    <interactant intactId="EBI-11742507">
        <id>Q8TAP4-4</id>
    </interactant>
    <interactant intactId="EBI-12310821">
        <id>Q9UC07-2</id>
        <label>ZNF69</label>
    </interactant>
    <organismsDiffer>false</organismsDiffer>
    <experiments>3</experiments>
</comment>
<comment type="interaction">
    <interactant intactId="EBI-11742507">
        <id>Q8TAP4-4</id>
    </interactant>
    <interactant intactId="EBI-2849074">
        <id>P51523</id>
        <label>ZNF84</label>
    </interactant>
    <organismsDiffer>false</organismsDiffer>
    <experiments>3</experiments>
</comment>
<comment type="interaction">
    <interactant intactId="EBI-11742507">
        <id>Q8TAP4-4</id>
    </interactant>
    <interactant intactId="EBI-527853">
        <id>Q9UGI0</id>
        <label>ZRANB1</label>
    </interactant>
    <organismsDiffer>false</organismsDiffer>
    <experiments>3</experiments>
</comment>
<comment type="interaction">
    <interactant intactId="EBI-11742507">
        <id>Q8TAP4-4</id>
    </interactant>
    <interactant intactId="EBI-751531">
        <id>O15535</id>
        <label>ZSCAN9</label>
    </interactant>
    <organismsDiffer>false</organismsDiffer>
    <experiments>6</experiments>
</comment>
<comment type="interaction">
    <interactant intactId="EBI-11742507">
        <id>Q8TAP4-4</id>
    </interactant>
    <interactant intactId="EBI-25901704">
        <id>Q9HBH6</id>
    </interactant>
    <organismsDiffer>false</organismsDiffer>
    <experiments>3</experiments>
</comment>
<comment type="alternative products">
    <event type="alternative splicing"/>
    <isoform>
        <id>Q8TAP4-1</id>
        <name>1</name>
        <sequence type="displayed"/>
    </isoform>
    <isoform>
        <id>Q8TAP4-2</id>
        <name>2</name>
        <sequence type="described" ref="VSP_045313"/>
    </isoform>
    <isoform>
        <id>Q8TAP4-3</id>
        <name>3</name>
        <sequence type="described" ref="VSP_045312"/>
    </isoform>
    <isoform>
        <id>Q8TAP4-4</id>
        <name>4</name>
        <sequence type="described" ref="VSP_047379"/>
    </isoform>
</comment>
<reference key="1">
    <citation type="submission" date="2000-06" db="EMBL/GenBank/DDBJ databases">
        <title>The gene expressed in primary neuroblastoma.</title>
        <authorList>
            <person name="Nakagawara A."/>
            <person name="Inuzuka H."/>
            <person name="Ohira M."/>
            <person name="Shishikura T."/>
            <person name="Morohashi A."/>
            <person name="Kuma H."/>
            <person name="Nozawa I."/>
        </authorList>
    </citation>
    <scope>NUCLEOTIDE SEQUENCE [MRNA] (ISOFORMS 1 AND 3)</scope>
</reference>
<reference key="2">
    <citation type="journal article" date="2004" name="Nat. Genet.">
        <title>Complete sequencing and characterization of 21,243 full-length human cDNAs.</title>
        <authorList>
            <person name="Ota T."/>
            <person name="Suzuki Y."/>
            <person name="Nishikawa T."/>
            <person name="Otsuki T."/>
            <person name="Sugiyama T."/>
            <person name="Irie R."/>
            <person name="Wakamatsu A."/>
            <person name="Hayashi K."/>
            <person name="Sato H."/>
            <person name="Nagai K."/>
            <person name="Kimura K."/>
            <person name="Makita H."/>
            <person name="Sekine M."/>
            <person name="Obayashi M."/>
            <person name="Nishi T."/>
            <person name="Shibahara T."/>
            <person name="Tanaka T."/>
            <person name="Ishii S."/>
            <person name="Yamamoto J."/>
            <person name="Saito K."/>
            <person name="Kawai Y."/>
            <person name="Isono Y."/>
            <person name="Nakamura Y."/>
            <person name="Nagahari K."/>
            <person name="Murakami K."/>
            <person name="Yasuda T."/>
            <person name="Iwayanagi T."/>
            <person name="Wagatsuma M."/>
            <person name="Shiratori A."/>
            <person name="Sudo H."/>
            <person name="Hosoiri T."/>
            <person name="Kaku Y."/>
            <person name="Kodaira H."/>
            <person name="Kondo H."/>
            <person name="Sugawara M."/>
            <person name="Takahashi M."/>
            <person name="Kanda K."/>
            <person name="Yokoi T."/>
            <person name="Furuya T."/>
            <person name="Kikkawa E."/>
            <person name="Omura Y."/>
            <person name="Abe K."/>
            <person name="Kamihara K."/>
            <person name="Katsuta N."/>
            <person name="Sato K."/>
            <person name="Tanikawa M."/>
            <person name="Yamazaki M."/>
            <person name="Ninomiya K."/>
            <person name="Ishibashi T."/>
            <person name="Yamashita H."/>
            <person name="Murakawa K."/>
            <person name="Fujimori K."/>
            <person name="Tanai H."/>
            <person name="Kimata M."/>
            <person name="Watanabe M."/>
            <person name="Hiraoka S."/>
            <person name="Chiba Y."/>
            <person name="Ishida S."/>
            <person name="Ono Y."/>
            <person name="Takiguchi S."/>
            <person name="Watanabe S."/>
            <person name="Yosida M."/>
            <person name="Hotuta T."/>
            <person name="Kusano J."/>
            <person name="Kanehori K."/>
            <person name="Takahashi-Fujii A."/>
            <person name="Hara H."/>
            <person name="Tanase T.-O."/>
            <person name="Nomura Y."/>
            <person name="Togiya S."/>
            <person name="Komai F."/>
            <person name="Hara R."/>
            <person name="Takeuchi K."/>
            <person name="Arita M."/>
            <person name="Imose N."/>
            <person name="Musashino K."/>
            <person name="Yuuki H."/>
            <person name="Oshima A."/>
            <person name="Sasaki N."/>
            <person name="Aotsuka S."/>
            <person name="Yoshikawa Y."/>
            <person name="Matsunawa H."/>
            <person name="Ichihara T."/>
            <person name="Shiohata N."/>
            <person name="Sano S."/>
            <person name="Moriya S."/>
            <person name="Momiyama H."/>
            <person name="Satoh N."/>
            <person name="Takami S."/>
            <person name="Terashima Y."/>
            <person name="Suzuki O."/>
            <person name="Nakagawa S."/>
            <person name="Senoh A."/>
            <person name="Mizoguchi H."/>
            <person name="Goto Y."/>
            <person name="Shimizu F."/>
            <person name="Wakebe H."/>
            <person name="Hishigaki H."/>
            <person name="Watanabe T."/>
            <person name="Sugiyama A."/>
            <person name="Takemoto M."/>
            <person name="Kawakami B."/>
            <person name="Yamazaki M."/>
            <person name="Watanabe K."/>
            <person name="Kumagai A."/>
            <person name="Itakura S."/>
            <person name="Fukuzumi Y."/>
            <person name="Fujimori Y."/>
            <person name="Komiyama M."/>
            <person name="Tashiro H."/>
            <person name="Tanigami A."/>
            <person name="Fujiwara T."/>
            <person name="Ono T."/>
            <person name="Yamada K."/>
            <person name="Fujii Y."/>
            <person name="Ozaki K."/>
            <person name="Hirao M."/>
            <person name="Ohmori Y."/>
            <person name="Kawabata A."/>
            <person name="Hikiji T."/>
            <person name="Kobatake N."/>
            <person name="Inagaki H."/>
            <person name="Ikema Y."/>
            <person name="Okamoto S."/>
            <person name="Okitani R."/>
            <person name="Kawakami T."/>
            <person name="Noguchi S."/>
            <person name="Itoh T."/>
            <person name="Shigeta K."/>
            <person name="Senba T."/>
            <person name="Matsumura K."/>
            <person name="Nakajima Y."/>
            <person name="Mizuno T."/>
            <person name="Morinaga M."/>
            <person name="Sasaki M."/>
            <person name="Togashi T."/>
            <person name="Oyama M."/>
            <person name="Hata H."/>
            <person name="Watanabe M."/>
            <person name="Komatsu T."/>
            <person name="Mizushima-Sugano J."/>
            <person name="Satoh T."/>
            <person name="Shirai Y."/>
            <person name="Takahashi Y."/>
            <person name="Nakagawa K."/>
            <person name="Okumura K."/>
            <person name="Nagase T."/>
            <person name="Nomura N."/>
            <person name="Kikuchi H."/>
            <person name="Masuho Y."/>
            <person name="Yamashita R."/>
            <person name="Nakai K."/>
            <person name="Yada T."/>
            <person name="Nakamura Y."/>
            <person name="Ohara O."/>
            <person name="Isogai T."/>
            <person name="Sugano S."/>
        </authorList>
    </citation>
    <scope>NUCLEOTIDE SEQUENCE [LARGE SCALE MRNA] (ISOFORMS 1; 2 AND 4)</scope>
    <source>
        <tissue>Amygdala</tissue>
        <tissue>Brain</tissue>
    </source>
</reference>
<reference key="3">
    <citation type="journal article" date="2006" name="Nature">
        <title>The finished DNA sequence of human chromosome 12.</title>
        <authorList>
            <person name="Scherer S.E."/>
            <person name="Muzny D.M."/>
            <person name="Buhay C.J."/>
            <person name="Chen R."/>
            <person name="Cree A."/>
            <person name="Ding Y."/>
            <person name="Dugan-Rocha S."/>
            <person name="Gill R."/>
            <person name="Gunaratne P."/>
            <person name="Harris R.A."/>
            <person name="Hawes A.C."/>
            <person name="Hernandez J."/>
            <person name="Hodgson A.V."/>
            <person name="Hume J."/>
            <person name="Jackson A."/>
            <person name="Khan Z.M."/>
            <person name="Kovar-Smith C."/>
            <person name="Lewis L.R."/>
            <person name="Lozado R.J."/>
            <person name="Metzker M.L."/>
            <person name="Milosavljevic A."/>
            <person name="Miner G.R."/>
            <person name="Montgomery K.T."/>
            <person name="Morgan M.B."/>
            <person name="Nazareth L.V."/>
            <person name="Scott G."/>
            <person name="Sodergren E."/>
            <person name="Song X.-Z."/>
            <person name="Steffen D."/>
            <person name="Lovering R.C."/>
            <person name="Wheeler D.A."/>
            <person name="Worley K.C."/>
            <person name="Yuan Y."/>
            <person name="Zhang Z."/>
            <person name="Adams C.Q."/>
            <person name="Ansari-Lari M.A."/>
            <person name="Ayele M."/>
            <person name="Brown M.J."/>
            <person name="Chen G."/>
            <person name="Chen Z."/>
            <person name="Clerc-Blankenburg K.P."/>
            <person name="Davis C."/>
            <person name="Delgado O."/>
            <person name="Dinh H.H."/>
            <person name="Draper H."/>
            <person name="Gonzalez-Garay M.L."/>
            <person name="Havlak P."/>
            <person name="Jackson L.R."/>
            <person name="Jacob L.S."/>
            <person name="Kelly S.H."/>
            <person name="Li L."/>
            <person name="Li Z."/>
            <person name="Liu J."/>
            <person name="Liu W."/>
            <person name="Lu J."/>
            <person name="Maheshwari M."/>
            <person name="Nguyen B.-V."/>
            <person name="Okwuonu G.O."/>
            <person name="Pasternak S."/>
            <person name="Perez L.M."/>
            <person name="Plopper F.J.H."/>
            <person name="Santibanez J."/>
            <person name="Shen H."/>
            <person name="Tabor P.E."/>
            <person name="Verduzco D."/>
            <person name="Waldron L."/>
            <person name="Wang Q."/>
            <person name="Williams G.A."/>
            <person name="Zhang J."/>
            <person name="Zhou J."/>
            <person name="Allen C.C."/>
            <person name="Amin A.G."/>
            <person name="Anyalebechi V."/>
            <person name="Bailey M."/>
            <person name="Barbaria J.A."/>
            <person name="Bimage K.E."/>
            <person name="Bryant N.P."/>
            <person name="Burch P.E."/>
            <person name="Burkett C.E."/>
            <person name="Burrell K.L."/>
            <person name="Calderon E."/>
            <person name="Cardenas V."/>
            <person name="Carter K."/>
            <person name="Casias K."/>
            <person name="Cavazos I."/>
            <person name="Cavazos S.R."/>
            <person name="Ceasar H."/>
            <person name="Chacko J."/>
            <person name="Chan S.N."/>
            <person name="Chavez D."/>
            <person name="Christopoulos C."/>
            <person name="Chu J."/>
            <person name="Cockrell R."/>
            <person name="Cox C.D."/>
            <person name="Dang M."/>
            <person name="Dathorne S.R."/>
            <person name="David R."/>
            <person name="Davis C.M."/>
            <person name="Davy-Carroll L."/>
            <person name="Deshazo D.R."/>
            <person name="Donlin J.E."/>
            <person name="D'Souza L."/>
            <person name="Eaves K.A."/>
            <person name="Egan A."/>
            <person name="Emery-Cohen A.J."/>
            <person name="Escotto M."/>
            <person name="Flagg N."/>
            <person name="Forbes L.D."/>
            <person name="Gabisi A.M."/>
            <person name="Garza M."/>
            <person name="Hamilton C."/>
            <person name="Henderson N."/>
            <person name="Hernandez O."/>
            <person name="Hines S."/>
            <person name="Hogues M.E."/>
            <person name="Huang M."/>
            <person name="Idlebird D.G."/>
            <person name="Johnson R."/>
            <person name="Jolivet A."/>
            <person name="Jones S."/>
            <person name="Kagan R."/>
            <person name="King L.M."/>
            <person name="Leal B."/>
            <person name="Lebow H."/>
            <person name="Lee S."/>
            <person name="LeVan J.M."/>
            <person name="Lewis L.C."/>
            <person name="London P."/>
            <person name="Lorensuhewa L.M."/>
            <person name="Loulseged H."/>
            <person name="Lovett D.A."/>
            <person name="Lucier A."/>
            <person name="Lucier R.L."/>
            <person name="Ma J."/>
            <person name="Madu R.C."/>
            <person name="Mapua P."/>
            <person name="Martindale A.D."/>
            <person name="Martinez E."/>
            <person name="Massey E."/>
            <person name="Mawhiney S."/>
            <person name="Meador M.G."/>
            <person name="Mendez S."/>
            <person name="Mercado C."/>
            <person name="Mercado I.C."/>
            <person name="Merritt C.E."/>
            <person name="Miner Z.L."/>
            <person name="Minja E."/>
            <person name="Mitchell T."/>
            <person name="Mohabbat F."/>
            <person name="Mohabbat K."/>
            <person name="Montgomery B."/>
            <person name="Moore N."/>
            <person name="Morris S."/>
            <person name="Munidasa M."/>
            <person name="Ngo R.N."/>
            <person name="Nguyen N.B."/>
            <person name="Nickerson E."/>
            <person name="Nwaokelemeh O.O."/>
            <person name="Nwokenkwo S."/>
            <person name="Obregon M."/>
            <person name="Oguh M."/>
            <person name="Oragunye N."/>
            <person name="Oviedo R.J."/>
            <person name="Parish B.J."/>
            <person name="Parker D.N."/>
            <person name="Parrish J."/>
            <person name="Parks K.L."/>
            <person name="Paul H.A."/>
            <person name="Payton B.A."/>
            <person name="Perez A."/>
            <person name="Perrin W."/>
            <person name="Pickens A."/>
            <person name="Primus E.L."/>
            <person name="Pu L.-L."/>
            <person name="Puazo M."/>
            <person name="Quiles M.M."/>
            <person name="Quiroz J.B."/>
            <person name="Rabata D."/>
            <person name="Reeves K."/>
            <person name="Ruiz S.J."/>
            <person name="Shao H."/>
            <person name="Sisson I."/>
            <person name="Sonaike T."/>
            <person name="Sorelle R.P."/>
            <person name="Sutton A.E."/>
            <person name="Svatek A.F."/>
            <person name="Svetz L.A."/>
            <person name="Tamerisa K.S."/>
            <person name="Taylor T.R."/>
            <person name="Teague B."/>
            <person name="Thomas N."/>
            <person name="Thorn R.D."/>
            <person name="Trejos Z.Y."/>
            <person name="Trevino B.K."/>
            <person name="Ukegbu O.N."/>
            <person name="Urban J.B."/>
            <person name="Vasquez L.I."/>
            <person name="Vera V.A."/>
            <person name="Villasana D.M."/>
            <person name="Wang L."/>
            <person name="Ward-Moore S."/>
            <person name="Warren J.T."/>
            <person name="Wei X."/>
            <person name="White F."/>
            <person name="Williamson A.L."/>
            <person name="Wleczyk R."/>
            <person name="Wooden H.S."/>
            <person name="Wooden S.H."/>
            <person name="Yen J."/>
            <person name="Yoon L."/>
            <person name="Yoon V."/>
            <person name="Zorrilla S.E."/>
            <person name="Nelson D."/>
            <person name="Kucherlapati R."/>
            <person name="Weinstock G."/>
            <person name="Gibbs R.A."/>
        </authorList>
    </citation>
    <scope>NUCLEOTIDE SEQUENCE [LARGE SCALE GENOMIC DNA]</scope>
</reference>
<reference key="4">
    <citation type="submission" date="2005-07" db="EMBL/GenBank/DDBJ databases">
        <authorList>
            <person name="Mural R.J."/>
            <person name="Istrail S."/>
            <person name="Sutton G."/>
            <person name="Florea L."/>
            <person name="Halpern A.L."/>
            <person name="Mobarry C.M."/>
            <person name="Lippert R."/>
            <person name="Walenz B."/>
            <person name="Shatkay H."/>
            <person name="Dew I."/>
            <person name="Miller J.R."/>
            <person name="Flanigan M.J."/>
            <person name="Edwards N.J."/>
            <person name="Bolanos R."/>
            <person name="Fasulo D."/>
            <person name="Halldorsson B.V."/>
            <person name="Hannenhalli S."/>
            <person name="Turner R."/>
            <person name="Yooseph S."/>
            <person name="Lu F."/>
            <person name="Nusskern D.R."/>
            <person name="Shue B.C."/>
            <person name="Zheng X.H."/>
            <person name="Zhong F."/>
            <person name="Delcher A.L."/>
            <person name="Huson D.H."/>
            <person name="Kravitz S.A."/>
            <person name="Mouchard L."/>
            <person name="Reinert K."/>
            <person name="Remington K.A."/>
            <person name="Clark A.G."/>
            <person name="Waterman M.S."/>
            <person name="Eichler E.E."/>
            <person name="Adams M.D."/>
            <person name="Hunkapiller M.W."/>
            <person name="Myers E.W."/>
            <person name="Venter J.C."/>
        </authorList>
    </citation>
    <scope>NUCLEOTIDE SEQUENCE [LARGE SCALE GENOMIC DNA]</scope>
</reference>
<reference key="5">
    <citation type="journal article" date="2004" name="Genome Res.">
        <title>The status, quality, and expansion of the NIH full-length cDNA project: the Mammalian Gene Collection (MGC).</title>
        <authorList>
            <consortium name="The MGC Project Team"/>
        </authorList>
    </citation>
    <scope>NUCLEOTIDE SEQUENCE [LARGE SCALE MRNA] (ISOFORM 1)</scope>
    <source>
        <tissue>Brain</tissue>
    </source>
</reference>
<reference key="6">
    <citation type="journal article" date="1992" name="J. Mol. Biol.">
        <title>The rhombotin gene family encode related LIM-domain proteins whose differing expression suggests multiple roles in mouse development.</title>
        <authorList>
            <person name="Foroni L."/>
            <person name="Boehm T."/>
            <person name="White L."/>
            <person name="Forster A."/>
            <person name="Sherrington P."/>
            <person name="Liao X.B."/>
            <person name="Brannan C.I."/>
            <person name="Jenkins N.A."/>
            <person name="Copeland N.G."/>
            <person name="Rabbitts T.H."/>
        </authorList>
    </citation>
    <scope>NUCLEOTIDE SEQUENCE [MRNA] OF 1-69</scope>
    <source>
        <tissue>Brain</tissue>
    </source>
</reference>